<proteinExistence type="evidence at protein level"/>
<dbReference type="EMBL" id="D90455">
    <property type="protein sequence ID" value="BAA14421.1"/>
    <property type="molecule type" value="Genomic_DNA"/>
</dbReference>
<dbReference type="EMBL" id="Z26879">
    <property type="protein sequence ID" value="CAA81524.1"/>
    <property type="molecule type" value="Genomic_DNA"/>
</dbReference>
<dbReference type="EMBL" id="Z35835">
    <property type="protein sequence ID" value="CAA84894.1"/>
    <property type="molecule type" value="Genomic_DNA"/>
</dbReference>
<dbReference type="EMBL" id="M36115">
    <property type="status" value="NOT_ANNOTATED_CDS"/>
    <property type="molecule type" value="Genomic_DNA"/>
</dbReference>
<dbReference type="EMBL" id="BK006936">
    <property type="protein sequence ID" value="DAA07048.1"/>
    <property type="molecule type" value="Genomic_DNA"/>
</dbReference>
<dbReference type="PIR" id="S18510">
    <property type="entry name" value="S18510"/>
</dbReference>
<dbReference type="RefSeq" id="NP_009479.1">
    <property type="nucleotide sequence ID" value="NM_001178314.1"/>
</dbReference>
<dbReference type="PDB" id="3SBS">
    <property type="method" value="X-ray"/>
    <property type="resolution" value="2.10 A"/>
    <property type="chains" value="A=1-355"/>
</dbReference>
<dbReference type="PDB" id="3SBT">
    <property type="method" value="X-ray"/>
    <property type="resolution" value="1.80 A"/>
    <property type="chains" value="B=1-355"/>
</dbReference>
<dbReference type="PDB" id="3ZEF">
    <property type="method" value="X-ray"/>
    <property type="resolution" value="3.10 A"/>
    <property type="chains" value="A/D=1-355"/>
</dbReference>
<dbReference type="PDB" id="4I43">
    <property type="method" value="X-ray"/>
    <property type="resolution" value="2.00 A"/>
    <property type="chains" value="A=1-355"/>
</dbReference>
<dbReference type="PDB" id="4ILG">
    <property type="method" value="X-ray"/>
    <property type="resolution" value="2.10 A"/>
    <property type="chains" value="A=1-355"/>
</dbReference>
<dbReference type="PDB" id="4ILH">
    <property type="method" value="X-ray"/>
    <property type="resolution" value="1.85 A"/>
    <property type="chains" value="B=1-331"/>
</dbReference>
<dbReference type="PDB" id="4ILI">
    <property type="method" value="X-ray"/>
    <property type="resolution" value="3.20 A"/>
    <property type="chains" value="A/B=1-318"/>
</dbReference>
<dbReference type="PDB" id="5QY1">
    <property type="method" value="X-ray"/>
    <property type="resolution" value="1.72 A"/>
    <property type="chains" value="B=1-152, B=171-317"/>
</dbReference>
<dbReference type="PDB" id="5QY2">
    <property type="method" value="X-ray"/>
    <property type="resolution" value="1.36 A"/>
    <property type="chains" value="B=1-152, B=171-317"/>
</dbReference>
<dbReference type="PDB" id="5QY3">
    <property type="method" value="X-ray"/>
    <property type="resolution" value="1.58 A"/>
    <property type="chains" value="B=1-152, B=171-317"/>
</dbReference>
<dbReference type="PDB" id="5QY4">
    <property type="method" value="X-ray"/>
    <property type="resolution" value="1.57 A"/>
    <property type="chains" value="B=1-152, B=171-317"/>
</dbReference>
<dbReference type="PDB" id="5QY5">
    <property type="method" value="X-ray"/>
    <property type="resolution" value="1.51 A"/>
    <property type="chains" value="B=1-152, B=171-317"/>
</dbReference>
<dbReference type="PDB" id="5QY6">
    <property type="method" value="X-ray"/>
    <property type="resolution" value="1.51 A"/>
    <property type="chains" value="B=1-152, B=171-317"/>
</dbReference>
<dbReference type="PDB" id="5QY7">
    <property type="method" value="X-ray"/>
    <property type="resolution" value="1.67 A"/>
    <property type="chains" value="B=1-152, B=171-317"/>
</dbReference>
<dbReference type="PDB" id="5QY8">
    <property type="method" value="X-ray"/>
    <property type="resolution" value="1.59 A"/>
    <property type="chains" value="B=1-152, B=171-317"/>
</dbReference>
<dbReference type="PDB" id="5QY9">
    <property type="method" value="X-ray"/>
    <property type="resolution" value="1.40 A"/>
    <property type="chains" value="B=1-152, B=171-317"/>
</dbReference>
<dbReference type="PDB" id="5QYA">
    <property type="method" value="X-ray"/>
    <property type="resolution" value="1.55 A"/>
    <property type="chains" value="B=1-152, B=171-317"/>
</dbReference>
<dbReference type="PDB" id="5QYB">
    <property type="method" value="X-ray"/>
    <property type="resolution" value="2.10 A"/>
    <property type="chains" value="B=1-152, B=171-317"/>
</dbReference>
<dbReference type="PDB" id="5QYC">
    <property type="method" value="X-ray"/>
    <property type="resolution" value="1.70 A"/>
    <property type="chains" value="B=1-152, B=171-317"/>
</dbReference>
<dbReference type="PDB" id="5QYD">
    <property type="method" value="X-ray"/>
    <property type="resolution" value="1.67 A"/>
    <property type="chains" value="B=1-152, B=171-317"/>
</dbReference>
<dbReference type="PDB" id="5QYE">
    <property type="method" value="X-ray"/>
    <property type="resolution" value="1.51 A"/>
    <property type="chains" value="B=1-152, B=171-317"/>
</dbReference>
<dbReference type="PDB" id="5QYF">
    <property type="method" value="X-ray"/>
    <property type="resolution" value="1.49 A"/>
    <property type="chains" value="B=1-152, B=171-317"/>
</dbReference>
<dbReference type="PDB" id="5QYG">
    <property type="method" value="X-ray"/>
    <property type="resolution" value="1.67 A"/>
    <property type="chains" value="B=1-152, B=171-317"/>
</dbReference>
<dbReference type="PDB" id="5QYH">
    <property type="method" value="X-ray"/>
    <property type="resolution" value="1.47 A"/>
    <property type="chains" value="B=1-152, B=171-317"/>
</dbReference>
<dbReference type="PDB" id="5QYI">
    <property type="method" value="X-ray"/>
    <property type="resolution" value="1.58 A"/>
    <property type="chains" value="B=1-152, B=171-317"/>
</dbReference>
<dbReference type="PDB" id="5QYJ">
    <property type="method" value="X-ray"/>
    <property type="resolution" value="1.51 A"/>
    <property type="chains" value="B=1-152, B=171-317"/>
</dbReference>
<dbReference type="PDB" id="5QYK">
    <property type="method" value="X-ray"/>
    <property type="resolution" value="1.63 A"/>
    <property type="chains" value="B=1-152, B=171-317"/>
</dbReference>
<dbReference type="PDB" id="5QYL">
    <property type="method" value="X-ray"/>
    <property type="resolution" value="1.56 A"/>
    <property type="chains" value="B=1-152, B=171-317"/>
</dbReference>
<dbReference type="PDB" id="5QYM">
    <property type="method" value="X-ray"/>
    <property type="resolution" value="1.47 A"/>
    <property type="chains" value="B=1-152, B=171-317"/>
</dbReference>
<dbReference type="PDB" id="5QYN">
    <property type="method" value="X-ray"/>
    <property type="resolution" value="1.65 A"/>
    <property type="chains" value="B=1-152, B=171-317"/>
</dbReference>
<dbReference type="PDB" id="5QYO">
    <property type="method" value="X-ray"/>
    <property type="resolution" value="1.58 A"/>
    <property type="chains" value="B=1-152, B=171-317"/>
</dbReference>
<dbReference type="PDB" id="5QYP">
    <property type="method" value="X-ray"/>
    <property type="resolution" value="1.61 A"/>
    <property type="chains" value="B=1-152, B=171-317"/>
</dbReference>
<dbReference type="PDB" id="5QYQ">
    <property type="method" value="X-ray"/>
    <property type="resolution" value="1.67 A"/>
    <property type="chains" value="B=1-152, B=171-317"/>
</dbReference>
<dbReference type="PDB" id="5QYR">
    <property type="method" value="X-ray"/>
    <property type="resolution" value="1.54 A"/>
    <property type="chains" value="B=1-152, B=171-317"/>
</dbReference>
<dbReference type="PDB" id="5QYS">
    <property type="method" value="X-ray"/>
    <property type="resolution" value="1.52 A"/>
    <property type="chains" value="B=1-152, B=171-317"/>
</dbReference>
<dbReference type="PDB" id="5QYT">
    <property type="method" value="X-ray"/>
    <property type="resolution" value="1.52 A"/>
    <property type="chains" value="B=1-152, B=171-317"/>
</dbReference>
<dbReference type="PDB" id="5QYU">
    <property type="method" value="X-ray"/>
    <property type="resolution" value="1.51 A"/>
    <property type="chains" value="B=1-152, B=171-317"/>
</dbReference>
<dbReference type="PDB" id="5QYV">
    <property type="method" value="X-ray"/>
    <property type="resolution" value="1.59 A"/>
    <property type="chains" value="B=1-152, B=171-317"/>
</dbReference>
<dbReference type="PDB" id="5QYW">
    <property type="method" value="X-ray"/>
    <property type="resolution" value="1.63 A"/>
    <property type="chains" value="B=1-152, B=171-317"/>
</dbReference>
<dbReference type="PDB" id="5QYX">
    <property type="method" value="X-ray"/>
    <property type="resolution" value="1.60 A"/>
    <property type="chains" value="B=1-152, B=171-317"/>
</dbReference>
<dbReference type="PDB" id="5QYY">
    <property type="method" value="X-ray"/>
    <property type="resolution" value="1.71 A"/>
    <property type="chains" value="B=1-152, B=171-317"/>
</dbReference>
<dbReference type="PDB" id="5QYZ">
    <property type="method" value="X-ray"/>
    <property type="resolution" value="1.37 A"/>
    <property type="chains" value="B=1-152, B=171-317"/>
</dbReference>
<dbReference type="PDB" id="5QZ0">
    <property type="method" value="X-ray"/>
    <property type="resolution" value="1.57 A"/>
    <property type="chains" value="B=1-152, B=171-317"/>
</dbReference>
<dbReference type="PDB" id="5QZ1">
    <property type="method" value="X-ray"/>
    <property type="resolution" value="1.58 A"/>
    <property type="chains" value="B=1-152, B=171-317"/>
</dbReference>
<dbReference type="PDB" id="5QZ2">
    <property type="method" value="X-ray"/>
    <property type="resolution" value="1.54 A"/>
    <property type="chains" value="B=1-152, B=171-317"/>
</dbReference>
<dbReference type="PDB" id="5QZ3">
    <property type="method" value="X-ray"/>
    <property type="resolution" value="1.53 A"/>
    <property type="chains" value="B=1-152, B=171-317"/>
</dbReference>
<dbReference type="PDB" id="5QZ4">
    <property type="method" value="X-ray"/>
    <property type="resolution" value="1.75 A"/>
    <property type="chains" value="B=1-152, B=171-317"/>
</dbReference>
<dbReference type="PDB" id="5QZ5">
    <property type="method" value="X-ray"/>
    <property type="resolution" value="1.51 A"/>
    <property type="chains" value="B=1-152, B=171-317"/>
</dbReference>
<dbReference type="PDB" id="5QZ6">
    <property type="method" value="X-ray"/>
    <property type="resolution" value="1.32 A"/>
    <property type="chains" value="B=1-152, B=171-317"/>
</dbReference>
<dbReference type="PDB" id="5QZ7">
    <property type="method" value="X-ray"/>
    <property type="resolution" value="1.48 A"/>
    <property type="chains" value="B=1-152, B=171-317"/>
</dbReference>
<dbReference type="PDB" id="5QZ8">
    <property type="method" value="X-ray"/>
    <property type="resolution" value="1.62 A"/>
    <property type="chains" value="B=1-152, B=171-317"/>
</dbReference>
<dbReference type="PDB" id="5QZ9">
    <property type="method" value="X-ray"/>
    <property type="resolution" value="1.43 A"/>
    <property type="chains" value="B=1-152, B=171-317"/>
</dbReference>
<dbReference type="PDB" id="5QZA">
    <property type="method" value="X-ray"/>
    <property type="resolution" value="1.51 A"/>
    <property type="chains" value="B=1-152, B=171-317"/>
</dbReference>
<dbReference type="PDB" id="5QZB">
    <property type="method" value="X-ray"/>
    <property type="resolution" value="1.69 A"/>
    <property type="chains" value="B=1-152, B=171-317"/>
</dbReference>
<dbReference type="PDB" id="5QZC">
    <property type="method" value="X-ray"/>
    <property type="resolution" value="1.72 A"/>
    <property type="chains" value="B=1-152, B=171-317"/>
</dbReference>
<dbReference type="PDB" id="5QZD">
    <property type="method" value="X-ray"/>
    <property type="resolution" value="1.59 A"/>
    <property type="chains" value="B=1-152, B=171-317"/>
</dbReference>
<dbReference type="PDB" id="5QZE">
    <property type="method" value="X-ray"/>
    <property type="resolution" value="1.55 A"/>
    <property type="chains" value="B=1-152, B=171-317"/>
</dbReference>
<dbReference type="PDB" id="5QZF">
    <property type="method" value="X-ray"/>
    <property type="resolution" value="1.68 A"/>
    <property type="chains" value="B=1-152, B=171-317"/>
</dbReference>
<dbReference type="PDB" id="5QZG">
    <property type="method" value="X-ray"/>
    <property type="resolution" value="1.55 A"/>
    <property type="chains" value="B=1-152, B=171-317"/>
</dbReference>
<dbReference type="PDB" id="5QZH">
    <property type="method" value="X-ray"/>
    <property type="resolution" value="1.77 A"/>
    <property type="chains" value="B=1-152, B=171-317"/>
</dbReference>
<dbReference type="PDB" id="5QZI">
    <property type="method" value="X-ray"/>
    <property type="resolution" value="1.51 A"/>
    <property type="chains" value="B=1-152, B=171-317"/>
</dbReference>
<dbReference type="PDB" id="5QZJ">
    <property type="method" value="X-ray"/>
    <property type="resolution" value="1.51 A"/>
    <property type="chains" value="B=1-152, B=171-317"/>
</dbReference>
<dbReference type="PDB" id="5QZK">
    <property type="method" value="X-ray"/>
    <property type="resolution" value="1.73 A"/>
    <property type="chains" value="B=1-152, B=171-317"/>
</dbReference>
<dbReference type="PDB" id="5QZL">
    <property type="method" value="X-ray"/>
    <property type="resolution" value="1.54 A"/>
    <property type="chains" value="B=1-152, B=171-317"/>
</dbReference>
<dbReference type="PDB" id="5QZM">
    <property type="method" value="X-ray"/>
    <property type="resolution" value="1.66 A"/>
    <property type="chains" value="B=1-152, B=171-317"/>
</dbReference>
<dbReference type="PDB" id="5QZN">
    <property type="method" value="X-ray"/>
    <property type="resolution" value="1.44 A"/>
    <property type="chains" value="B=1-152, B=171-317"/>
</dbReference>
<dbReference type="PDB" id="5QZO">
    <property type="method" value="X-ray"/>
    <property type="resolution" value="1.39 A"/>
    <property type="chains" value="B=1-152, B=171-317"/>
</dbReference>
<dbReference type="PDB" id="5QZP">
    <property type="method" value="X-ray"/>
    <property type="resolution" value="1.50 A"/>
    <property type="chains" value="B=1-152, B=171-317"/>
</dbReference>
<dbReference type="PDB" id="5QZQ">
    <property type="method" value="X-ray"/>
    <property type="resolution" value="2.11 A"/>
    <property type="chains" value="B=1-152, B=171-317"/>
</dbReference>
<dbReference type="PDB" id="5QZR">
    <property type="method" value="X-ray"/>
    <property type="resolution" value="1.59 A"/>
    <property type="chains" value="B=1-152, B=171-317"/>
</dbReference>
<dbReference type="PDB" id="5QZS">
    <property type="method" value="X-ray"/>
    <property type="resolution" value="1.58 A"/>
    <property type="chains" value="B=1-152, B=171-317"/>
</dbReference>
<dbReference type="PDB" id="5QZT">
    <property type="method" value="X-ray"/>
    <property type="resolution" value="1.53 A"/>
    <property type="chains" value="B=1-152, B=171-317"/>
</dbReference>
<dbReference type="PDB" id="5QZU">
    <property type="method" value="X-ray"/>
    <property type="resolution" value="1.54 A"/>
    <property type="chains" value="B=1-152, B=171-317"/>
</dbReference>
<dbReference type="PDB" id="5QZV">
    <property type="method" value="X-ray"/>
    <property type="resolution" value="2.11 A"/>
    <property type="chains" value="B=1-152, B=171-317"/>
</dbReference>
<dbReference type="PDB" id="5QZW">
    <property type="method" value="X-ray"/>
    <property type="resolution" value="1.36 A"/>
    <property type="chains" value="B=1-152, B=171-317"/>
</dbReference>
<dbReference type="PDB" id="5QZX">
    <property type="method" value="X-ray"/>
    <property type="resolution" value="1.55 A"/>
    <property type="chains" value="B=1-152, B=171-317"/>
</dbReference>
<dbReference type="PDB" id="5QZY">
    <property type="method" value="X-ray"/>
    <property type="resolution" value="1.66 A"/>
    <property type="chains" value="B=1-152, B=171-317"/>
</dbReference>
<dbReference type="PDB" id="5QZZ">
    <property type="method" value="X-ray"/>
    <property type="resolution" value="1.59 A"/>
    <property type="chains" value="B=1-152, B=171-317"/>
</dbReference>
<dbReference type="PDB" id="5R00">
    <property type="method" value="X-ray"/>
    <property type="resolution" value="1.72 A"/>
    <property type="chains" value="B=1-152, B=171-317"/>
</dbReference>
<dbReference type="PDB" id="5R01">
    <property type="method" value="X-ray"/>
    <property type="resolution" value="1.72 A"/>
    <property type="chains" value="B=1-152, B=171-317"/>
</dbReference>
<dbReference type="PDB" id="5R02">
    <property type="method" value="X-ray"/>
    <property type="resolution" value="1.66 A"/>
    <property type="chains" value="B=1-152, B=171-317"/>
</dbReference>
<dbReference type="PDB" id="5R03">
    <property type="method" value="X-ray"/>
    <property type="resolution" value="1.51 A"/>
    <property type="chains" value="B=1-152, B=171-317"/>
</dbReference>
<dbReference type="PDB" id="5R04">
    <property type="method" value="X-ray"/>
    <property type="resolution" value="1.34 A"/>
    <property type="chains" value="B=1-152, B=171-317"/>
</dbReference>
<dbReference type="PDB" id="5R05">
    <property type="method" value="X-ray"/>
    <property type="resolution" value="1.57 A"/>
    <property type="chains" value="B=1-152, B=171-317"/>
</dbReference>
<dbReference type="PDB" id="5R06">
    <property type="method" value="X-ray"/>
    <property type="resolution" value="1.67 A"/>
    <property type="chains" value="B=1-152, B=171-317"/>
</dbReference>
<dbReference type="PDB" id="5R07">
    <property type="method" value="X-ray"/>
    <property type="resolution" value="1.71 A"/>
    <property type="chains" value="B=1-152, B=171-317"/>
</dbReference>
<dbReference type="PDB" id="5R08">
    <property type="method" value="X-ray"/>
    <property type="resolution" value="1.70 A"/>
    <property type="chains" value="B=1-317"/>
</dbReference>
<dbReference type="PDB" id="5R09">
    <property type="method" value="X-ray"/>
    <property type="resolution" value="1.56 A"/>
    <property type="chains" value="B=1-317"/>
</dbReference>
<dbReference type="PDB" id="5R0A">
    <property type="method" value="X-ray"/>
    <property type="resolution" value="1.54 A"/>
    <property type="chains" value="B=1-317"/>
</dbReference>
<dbReference type="PDB" id="5R0B">
    <property type="method" value="X-ray"/>
    <property type="resolution" value="1.82 A"/>
    <property type="chains" value="B=1-317"/>
</dbReference>
<dbReference type="PDB" id="5R0C">
    <property type="method" value="X-ray"/>
    <property type="resolution" value="1.60 A"/>
    <property type="chains" value="B=1-317"/>
</dbReference>
<dbReference type="PDB" id="5R0D">
    <property type="method" value="X-ray"/>
    <property type="resolution" value="1.27 A"/>
    <property type="chains" value="B=1-317"/>
</dbReference>
<dbReference type="PDB" id="5R0E">
    <property type="method" value="X-ray"/>
    <property type="resolution" value="1.59 A"/>
    <property type="chains" value="B=1-317"/>
</dbReference>
<dbReference type="PDB" id="5R0F">
    <property type="method" value="X-ray"/>
    <property type="resolution" value="1.97 A"/>
    <property type="chains" value="B=1-317"/>
</dbReference>
<dbReference type="PDB" id="5R0G">
    <property type="method" value="X-ray"/>
    <property type="resolution" value="1.73 A"/>
    <property type="chains" value="B=1-317"/>
</dbReference>
<dbReference type="PDB" id="5R0H">
    <property type="method" value="X-ray"/>
    <property type="resolution" value="1.57 A"/>
    <property type="chains" value="B=1-317"/>
</dbReference>
<dbReference type="PDB" id="5R0I">
    <property type="method" value="X-ray"/>
    <property type="resolution" value="1.86 A"/>
    <property type="chains" value="B=1-317"/>
</dbReference>
<dbReference type="PDB" id="5R0J">
    <property type="method" value="X-ray"/>
    <property type="resolution" value="1.81 A"/>
    <property type="chains" value="B=1-317"/>
</dbReference>
<dbReference type="PDB" id="5R0K">
    <property type="method" value="X-ray"/>
    <property type="resolution" value="1.80 A"/>
    <property type="chains" value="B=1-317"/>
</dbReference>
<dbReference type="PDB" id="5R0L">
    <property type="method" value="X-ray"/>
    <property type="resolution" value="1.70 A"/>
    <property type="chains" value="B=1-317"/>
</dbReference>
<dbReference type="PDB" id="5R0M">
    <property type="method" value="X-ray"/>
    <property type="resolution" value="1.70 A"/>
    <property type="chains" value="B=1-317"/>
</dbReference>
<dbReference type="PDB" id="5R0N">
    <property type="method" value="X-ray"/>
    <property type="resolution" value="1.78 A"/>
    <property type="chains" value="B=1-317"/>
</dbReference>
<dbReference type="PDB" id="5R0O">
    <property type="method" value="X-ray"/>
    <property type="resolution" value="1.86 A"/>
    <property type="chains" value="B=1-317"/>
</dbReference>
<dbReference type="PDB" id="5R0P">
    <property type="method" value="X-ray"/>
    <property type="resolution" value="1.73 A"/>
    <property type="chains" value="B=1-317"/>
</dbReference>
<dbReference type="PDB" id="5R0Q">
    <property type="method" value="X-ray"/>
    <property type="resolution" value="1.91 A"/>
    <property type="chains" value="B=1-317"/>
</dbReference>
<dbReference type="PDB" id="5R0R">
    <property type="method" value="X-ray"/>
    <property type="resolution" value="1.73 A"/>
    <property type="chains" value="B=1-317"/>
</dbReference>
<dbReference type="PDB" id="5R0S">
    <property type="method" value="X-ray"/>
    <property type="resolution" value="1.81 A"/>
    <property type="chains" value="B=1-317"/>
</dbReference>
<dbReference type="PDB" id="5R0T">
    <property type="method" value="X-ray"/>
    <property type="resolution" value="1.96 A"/>
    <property type="chains" value="B=1-317"/>
</dbReference>
<dbReference type="PDB" id="5R0U">
    <property type="method" value="X-ray"/>
    <property type="resolution" value="1.86 A"/>
    <property type="chains" value="B=1-317"/>
</dbReference>
<dbReference type="PDB" id="5R0V">
    <property type="method" value="X-ray"/>
    <property type="resolution" value="1.81 A"/>
    <property type="chains" value="B=1-317"/>
</dbReference>
<dbReference type="PDB" id="5R0W">
    <property type="method" value="X-ray"/>
    <property type="resolution" value="1.86 A"/>
    <property type="chains" value="B=1-317"/>
</dbReference>
<dbReference type="PDB" id="5R0X">
    <property type="method" value="X-ray"/>
    <property type="resolution" value="1.84 A"/>
    <property type="chains" value="B=1-317"/>
</dbReference>
<dbReference type="PDB" id="5R0Y">
    <property type="method" value="X-ray"/>
    <property type="resolution" value="1.75 A"/>
    <property type="chains" value="B=1-317"/>
</dbReference>
<dbReference type="PDB" id="5R0Z">
    <property type="method" value="X-ray"/>
    <property type="resolution" value="1.86 A"/>
    <property type="chains" value="B=1-317"/>
</dbReference>
<dbReference type="PDB" id="5R10">
    <property type="method" value="X-ray"/>
    <property type="resolution" value="1.70 A"/>
    <property type="chains" value="B=1-317"/>
</dbReference>
<dbReference type="PDB" id="5R11">
    <property type="method" value="X-ray"/>
    <property type="resolution" value="1.82 A"/>
    <property type="chains" value="B=1-317"/>
</dbReference>
<dbReference type="PDB" id="5R12">
    <property type="method" value="X-ray"/>
    <property type="resolution" value="1.70 A"/>
    <property type="chains" value="B=1-317"/>
</dbReference>
<dbReference type="PDB" id="5R13">
    <property type="method" value="X-ray"/>
    <property type="resolution" value="1.87 A"/>
    <property type="chains" value="B=1-317"/>
</dbReference>
<dbReference type="PDB" id="5R14">
    <property type="method" value="X-ray"/>
    <property type="resolution" value="1.74 A"/>
    <property type="chains" value="B=1-317"/>
</dbReference>
<dbReference type="PDB" id="5R15">
    <property type="method" value="X-ray"/>
    <property type="resolution" value="1.79 A"/>
    <property type="chains" value="B=1-317"/>
</dbReference>
<dbReference type="PDB" id="5R16">
    <property type="method" value="X-ray"/>
    <property type="resolution" value="1.84 A"/>
    <property type="chains" value="B=1-317"/>
</dbReference>
<dbReference type="PDB" id="5R17">
    <property type="method" value="X-ray"/>
    <property type="resolution" value="1.87 A"/>
    <property type="chains" value="B=1-317"/>
</dbReference>
<dbReference type="PDB" id="5R18">
    <property type="method" value="X-ray"/>
    <property type="resolution" value="1.79 A"/>
    <property type="chains" value="B=1-317"/>
</dbReference>
<dbReference type="PDB" id="5R19">
    <property type="method" value="X-ray"/>
    <property type="resolution" value="1.70 A"/>
    <property type="chains" value="B=1-317"/>
</dbReference>
<dbReference type="PDB" id="5R1A">
    <property type="method" value="X-ray"/>
    <property type="resolution" value="1.73 A"/>
    <property type="chains" value="B=1-317"/>
</dbReference>
<dbReference type="PDB" id="5R1B">
    <property type="method" value="X-ray"/>
    <property type="resolution" value="1.89 A"/>
    <property type="chains" value="B=1-317"/>
</dbReference>
<dbReference type="PDB" id="5R1C">
    <property type="method" value="X-ray"/>
    <property type="resolution" value="1.91 A"/>
    <property type="chains" value="B=1-317"/>
</dbReference>
<dbReference type="PDB" id="5R1D">
    <property type="method" value="X-ray"/>
    <property type="resolution" value="1.82 A"/>
    <property type="chains" value="B=1-317"/>
</dbReference>
<dbReference type="PDB" id="5R1E">
    <property type="method" value="X-ray"/>
    <property type="resolution" value="1.70 A"/>
    <property type="chains" value="B=1-317"/>
</dbReference>
<dbReference type="PDB" id="5R1F">
    <property type="method" value="X-ray"/>
    <property type="resolution" value="1.80 A"/>
    <property type="chains" value="B=1-317"/>
</dbReference>
<dbReference type="PDB" id="5R1G">
    <property type="method" value="X-ray"/>
    <property type="resolution" value="1.81 A"/>
    <property type="chains" value="B=1-317"/>
</dbReference>
<dbReference type="PDB" id="5R1H">
    <property type="method" value="X-ray"/>
    <property type="resolution" value="2.06 A"/>
    <property type="chains" value="B=1-317"/>
</dbReference>
<dbReference type="PDB" id="5R1I">
    <property type="method" value="X-ray"/>
    <property type="resolution" value="2.01 A"/>
    <property type="chains" value="B=1-317"/>
</dbReference>
<dbReference type="PDB" id="5R1J">
    <property type="method" value="X-ray"/>
    <property type="resolution" value="1.96 A"/>
    <property type="chains" value="B=1-317"/>
</dbReference>
<dbReference type="PDB" id="5R1K">
    <property type="method" value="X-ray"/>
    <property type="resolution" value="1.99 A"/>
    <property type="chains" value="B=1-317"/>
</dbReference>
<dbReference type="PDB" id="5R1L">
    <property type="method" value="X-ray"/>
    <property type="resolution" value="1.94 A"/>
    <property type="chains" value="B=1-317"/>
</dbReference>
<dbReference type="PDB" id="5R1M">
    <property type="method" value="X-ray"/>
    <property type="resolution" value="1.90 A"/>
    <property type="chains" value="B=1-317"/>
</dbReference>
<dbReference type="PDB" id="5R1N">
    <property type="method" value="X-ray"/>
    <property type="resolution" value="1.94 A"/>
    <property type="chains" value="B=1-317"/>
</dbReference>
<dbReference type="PDB" id="5R1O">
    <property type="method" value="X-ray"/>
    <property type="resolution" value="1.90 A"/>
    <property type="chains" value="B=1-317"/>
</dbReference>
<dbReference type="PDB" id="5R1P">
    <property type="method" value="X-ray"/>
    <property type="resolution" value="1.95 A"/>
    <property type="chains" value="B=1-317"/>
</dbReference>
<dbReference type="PDB" id="5R1Q">
    <property type="method" value="X-ray"/>
    <property type="resolution" value="1.86 A"/>
    <property type="chains" value="B=1-317"/>
</dbReference>
<dbReference type="PDB" id="5R1S">
    <property type="method" value="X-ray"/>
    <property type="resolution" value="2.05 A"/>
    <property type="chains" value="B=1-317"/>
</dbReference>
<dbReference type="PDB" id="5ST0">
    <property type="method" value="X-ray"/>
    <property type="resolution" value="1.54 A"/>
    <property type="chains" value="B=1-317"/>
</dbReference>
<dbReference type="PDB" id="5ST1">
    <property type="method" value="X-ray"/>
    <property type="resolution" value="1.58 A"/>
    <property type="chains" value="B=1-317"/>
</dbReference>
<dbReference type="PDB" id="5ST2">
    <property type="method" value="X-ray"/>
    <property type="resolution" value="1.53 A"/>
    <property type="chains" value="B=1-317"/>
</dbReference>
<dbReference type="PDB" id="5ST3">
    <property type="method" value="X-ray"/>
    <property type="resolution" value="1.47 A"/>
    <property type="chains" value="B=1-317"/>
</dbReference>
<dbReference type="PDB" id="5ST4">
    <property type="method" value="X-ray"/>
    <property type="resolution" value="1.44 A"/>
    <property type="chains" value="B=1-317"/>
</dbReference>
<dbReference type="PDB" id="5ST5">
    <property type="method" value="X-ray"/>
    <property type="resolution" value="1.61 A"/>
    <property type="chains" value="B=1-317"/>
</dbReference>
<dbReference type="PDB" id="5ST6">
    <property type="method" value="X-ray"/>
    <property type="resolution" value="1.62 A"/>
    <property type="chains" value="B=1-317"/>
</dbReference>
<dbReference type="PDB" id="5ST7">
    <property type="method" value="X-ray"/>
    <property type="resolution" value="1.46 A"/>
    <property type="chains" value="B=1-317"/>
</dbReference>
<dbReference type="PDB" id="5ST8">
    <property type="method" value="X-ray"/>
    <property type="resolution" value="1.51 A"/>
    <property type="chains" value="B=1-317"/>
</dbReference>
<dbReference type="PDB" id="5ST9">
    <property type="method" value="X-ray"/>
    <property type="resolution" value="1.40 A"/>
    <property type="chains" value="B=1-317"/>
</dbReference>
<dbReference type="PDB" id="5STA">
    <property type="method" value="X-ray"/>
    <property type="resolution" value="1.58 A"/>
    <property type="chains" value="B=1-317"/>
</dbReference>
<dbReference type="PDB" id="5STB">
    <property type="method" value="X-ray"/>
    <property type="resolution" value="1.55 A"/>
    <property type="chains" value="B=1-317"/>
</dbReference>
<dbReference type="PDB" id="5STC">
    <property type="method" value="X-ray"/>
    <property type="resolution" value="1.44 A"/>
    <property type="chains" value="B=1-317"/>
</dbReference>
<dbReference type="PDB" id="5STE">
    <property type="method" value="X-ray"/>
    <property type="resolution" value="1.51 A"/>
    <property type="chains" value="B=1-317"/>
</dbReference>
<dbReference type="PDB" id="5STF">
    <property type="method" value="X-ray"/>
    <property type="resolution" value="1.45 A"/>
    <property type="chains" value="B=1-317"/>
</dbReference>
<dbReference type="PDB" id="5STG">
    <property type="method" value="X-ray"/>
    <property type="resolution" value="1.61 A"/>
    <property type="chains" value="B=1-317"/>
</dbReference>
<dbReference type="PDB" id="5STH">
    <property type="method" value="X-ray"/>
    <property type="resolution" value="1.67 A"/>
    <property type="chains" value="B=1-317"/>
</dbReference>
<dbReference type="PDB" id="5STI">
    <property type="method" value="X-ray"/>
    <property type="resolution" value="1.76 A"/>
    <property type="chains" value="B=1-317"/>
</dbReference>
<dbReference type="PDB" id="5STJ">
    <property type="method" value="X-ray"/>
    <property type="resolution" value="1.76 A"/>
    <property type="chains" value="B=1-317"/>
</dbReference>
<dbReference type="PDB" id="5STK">
    <property type="method" value="X-ray"/>
    <property type="resolution" value="1.80 A"/>
    <property type="chains" value="B=1-317"/>
</dbReference>
<dbReference type="PDB" id="5STL">
    <property type="method" value="X-ray"/>
    <property type="resolution" value="1.51 A"/>
    <property type="chains" value="B=1-317"/>
</dbReference>
<dbReference type="PDB" id="5STM">
    <property type="method" value="X-ray"/>
    <property type="resolution" value="1.65 A"/>
    <property type="chains" value="B=1-317"/>
</dbReference>
<dbReference type="PDB" id="5STN">
    <property type="method" value="X-ray"/>
    <property type="resolution" value="1.56 A"/>
    <property type="chains" value="B=1-317"/>
</dbReference>
<dbReference type="PDB" id="5STO">
    <property type="method" value="X-ray"/>
    <property type="resolution" value="1.55 A"/>
    <property type="chains" value="B=1-317"/>
</dbReference>
<dbReference type="PDB" id="5STP">
    <property type="method" value="X-ray"/>
    <property type="resolution" value="1.51 A"/>
    <property type="chains" value="B=1-317"/>
</dbReference>
<dbReference type="PDB" id="5STQ">
    <property type="method" value="X-ray"/>
    <property type="resolution" value="1.50 A"/>
    <property type="chains" value="B=1-317"/>
</dbReference>
<dbReference type="PDB" id="5STR">
    <property type="method" value="X-ray"/>
    <property type="resolution" value="1.45 A"/>
    <property type="chains" value="B=1-317"/>
</dbReference>
<dbReference type="PDB" id="5STS">
    <property type="method" value="X-ray"/>
    <property type="resolution" value="1.57 A"/>
    <property type="chains" value="B=1-317"/>
</dbReference>
<dbReference type="PDB" id="5STT">
    <property type="method" value="X-ray"/>
    <property type="resolution" value="1.49 A"/>
    <property type="chains" value="B=1-317"/>
</dbReference>
<dbReference type="PDB" id="5STU">
    <property type="method" value="X-ray"/>
    <property type="resolution" value="1.55 A"/>
    <property type="chains" value="B=1-317"/>
</dbReference>
<dbReference type="PDB" id="5STV">
    <property type="method" value="X-ray"/>
    <property type="resolution" value="1.50 A"/>
    <property type="chains" value="B=1-317"/>
</dbReference>
<dbReference type="PDB" id="5STW">
    <property type="method" value="X-ray"/>
    <property type="resolution" value="1.89 A"/>
    <property type="chains" value="B=1-317"/>
</dbReference>
<dbReference type="PDB" id="5STX">
    <property type="method" value="X-ray"/>
    <property type="resolution" value="1.50 A"/>
    <property type="chains" value="B=1-317"/>
</dbReference>
<dbReference type="PDB" id="5STY">
    <property type="method" value="X-ray"/>
    <property type="resolution" value="1.57 A"/>
    <property type="chains" value="B=1-317"/>
</dbReference>
<dbReference type="PDB" id="5STZ">
    <property type="method" value="X-ray"/>
    <property type="resolution" value="1.44 A"/>
    <property type="chains" value="B=1-317"/>
</dbReference>
<dbReference type="PDB" id="5SU0">
    <property type="method" value="X-ray"/>
    <property type="resolution" value="1.54 A"/>
    <property type="chains" value="B=1-317"/>
</dbReference>
<dbReference type="PDB" id="5SU1">
    <property type="method" value="X-ray"/>
    <property type="resolution" value="1.57 A"/>
    <property type="chains" value="B=1-317"/>
</dbReference>
<dbReference type="PDB" id="5SU2">
    <property type="method" value="X-ray"/>
    <property type="resolution" value="1.85 A"/>
    <property type="chains" value="B=1-317"/>
</dbReference>
<dbReference type="PDB" id="5SU3">
    <property type="method" value="X-ray"/>
    <property type="resolution" value="1.65 A"/>
    <property type="chains" value="B=1-317"/>
</dbReference>
<dbReference type="PDB" id="5SU4">
    <property type="method" value="X-ray"/>
    <property type="resolution" value="1.66 A"/>
    <property type="chains" value="B=1-317"/>
</dbReference>
<dbReference type="PDB" id="5SU5">
    <property type="method" value="X-ray"/>
    <property type="resolution" value="1.81 A"/>
    <property type="chains" value="B=1-317"/>
</dbReference>
<dbReference type="PDB" id="5SU6">
    <property type="method" value="X-ray"/>
    <property type="resolution" value="1.51 A"/>
    <property type="chains" value="B=1-317"/>
</dbReference>
<dbReference type="PDB" id="5SU7">
    <property type="method" value="X-ray"/>
    <property type="resolution" value="1.81 A"/>
    <property type="chains" value="B=1-317"/>
</dbReference>
<dbReference type="PDB" id="5SU8">
    <property type="method" value="X-ray"/>
    <property type="resolution" value="1.79 A"/>
    <property type="chains" value="B=1-317"/>
</dbReference>
<dbReference type="PDB" id="5SU9">
    <property type="method" value="X-ray"/>
    <property type="resolution" value="1.66 A"/>
    <property type="chains" value="B=1-317"/>
</dbReference>
<dbReference type="PDB" id="5SUA">
    <property type="method" value="X-ray"/>
    <property type="resolution" value="1.53 A"/>
    <property type="chains" value="B=1-317"/>
</dbReference>
<dbReference type="PDB" id="5SUB">
    <property type="method" value="X-ray"/>
    <property type="resolution" value="1.51 A"/>
    <property type="chains" value="B=1-317"/>
</dbReference>
<dbReference type="PDB" id="5SUC">
    <property type="method" value="X-ray"/>
    <property type="resolution" value="1.54 A"/>
    <property type="chains" value="B=1-317"/>
</dbReference>
<dbReference type="PDB" id="5SUD">
    <property type="method" value="X-ray"/>
    <property type="resolution" value="1.48 A"/>
    <property type="chains" value="B=1-317"/>
</dbReference>
<dbReference type="PDB" id="5SUE">
    <property type="method" value="X-ray"/>
    <property type="resolution" value="1.70 A"/>
    <property type="chains" value="B=1-317"/>
</dbReference>
<dbReference type="PDB" id="5SUF">
    <property type="method" value="X-ray"/>
    <property type="resolution" value="1.51 A"/>
    <property type="chains" value="B=1-317"/>
</dbReference>
<dbReference type="PDB" id="5SUG">
    <property type="method" value="X-ray"/>
    <property type="resolution" value="1.53 A"/>
    <property type="chains" value="B=1-317"/>
</dbReference>
<dbReference type="PDB" id="7FJU">
    <property type="method" value="X-ray"/>
    <property type="resolution" value="1.63 A"/>
    <property type="chains" value="B=1-317"/>
</dbReference>
<dbReference type="PDB" id="7FJV">
    <property type="method" value="X-ray"/>
    <property type="resolution" value="1.63 A"/>
    <property type="chains" value="B=1-317"/>
</dbReference>
<dbReference type="PDB" id="7FJW">
    <property type="method" value="X-ray"/>
    <property type="resolution" value="1.63 A"/>
    <property type="chains" value="B=1-317"/>
</dbReference>
<dbReference type="PDB" id="7FJX">
    <property type="method" value="X-ray"/>
    <property type="resolution" value="1.59 A"/>
    <property type="chains" value="B=1-317"/>
</dbReference>
<dbReference type="PDB" id="7FJY">
    <property type="method" value="X-ray"/>
    <property type="resolution" value="1.63 A"/>
    <property type="chains" value="B=1-317"/>
</dbReference>
<dbReference type="PDB" id="7FJZ">
    <property type="method" value="X-ray"/>
    <property type="resolution" value="1.54 A"/>
    <property type="chains" value="B=1-317"/>
</dbReference>
<dbReference type="PDB" id="7FK0">
    <property type="method" value="X-ray"/>
    <property type="resolution" value="1.69 A"/>
    <property type="chains" value="B=1-317"/>
</dbReference>
<dbReference type="PDB" id="7FK1">
    <property type="method" value="X-ray"/>
    <property type="resolution" value="1.76 A"/>
    <property type="chains" value="B=1-317"/>
</dbReference>
<dbReference type="PDB" id="7FK2">
    <property type="method" value="X-ray"/>
    <property type="resolution" value="1.35 A"/>
    <property type="chains" value="B=1-317"/>
</dbReference>
<dbReference type="PDB" id="7FK3">
    <property type="method" value="X-ray"/>
    <property type="resolution" value="1.59 A"/>
    <property type="chains" value="B=1-317"/>
</dbReference>
<dbReference type="PDB" id="7FK4">
    <property type="method" value="X-ray"/>
    <property type="resolution" value="1.59 A"/>
    <property type="chains" value="B=1-317"/>
</dbReference>
<dbReference type="PDB" id="7FK5">
    <property type="method" value="X-ray"/>
    <property type="resolution" value="1.53 A"/>
    <property type="chains" value="B=1-317"/>
</dbReference>
<dbReference type="PDB" id="7FK6">
    <property type="method" value="X-ray"/>
    <property type="resolution" value="1.61 A"/>
    <property type="chains" value="B=1-317"/>
</dbReference>
<dbReference type="PDB" id="7FK7">
    <property type="method" value="X-ray"/>
    <property type="resolution" value="1.72 A"/>
    <property type="chains" value="B=1-317"/>
</dbReference>
<dbReference type="PDB" id="7FK8">
    <property type="method" value="X-ray"/>
    <property type="resolution" value="1.67 A"/>
    <property type="chains" value="B=1-317"/>
</dbReference>
<dbReference type="PDB" id="7FK9">
    <property type="method" value="X-ray"/>
    <property type="resolution" value="1.35 A"/>
    <property type="chains" value="B=1-317"/>
</dbReference>
<dbReference type="PDB" id="7FKA">
    <property type="method" value="X-ray"/>
    <property type="resolution" value="1.55 A"/>
    <property type="chains" value="B=1-317"/>
</dbReference>
<dbReference type="PDB" id="7FKB">
    <property type="method" value="X-ray"/>
    <property type="resolution" value="1.68 A"/>
    <property type="chains" value="B=1-317"/>
</dbReference>
<dbReference type="PDB" id="7FKC">
    <property type="method" value="X-ray"/>
    <property type="resolution" value="1.54 A"/>
    <property type="chains" value="B=1-317"/>
</dbReference>
<dbReference type="PDB" id="7FKD">
    <property type="method" value="X-ray"/>
    <property type="resolution" value="1.45 A"/>
    <property type="chains" value="B=1-317"/>
</dbReference>
<dbReference type="PDB" id="7FKE">
    <property type="method" value="X-ray"/>
    <property type="resolution" value="1.48 A"/>
    <property type="chains" value="B=1-317"/>
</dbReference>
<dbReference type="PDB" id="7FKF">
    <property type="method" value="X-ray"/>
    <property type="resolution" value="1.69 A"/>
    <property type="chains" value="B=1-317"/>
</dbReference>
<dbReference type="PDB" id="7FKG">
    <property type="method" value="X-ray"/>
    <property type="resolution" value="1.51 A"/>
    <property type="chains" value="B=1-317"/>
</dbReference>
<dbReference type="PDB" id="7FKH">
    <property type="method" value="X-ray"/>
    <property type="resolution" value="1.44 A"/>
    <property type="chains" value="B=1-317"/>
</dbReference>
<dbReference type="PDB" id="7FKI">
    <property type="method" value="X-ray"/>
    <property type="resolution" value="1.47 A"/>
    <property type="chains" value="B=1-317"/>
</dbReference>
<dbReference type="PDB" id="7FKJ">
    <property type="method" value="X-ray"/>
    <property type="resolution" value="1.74 A"/>
    <property type="chains" value="B=1-317"/>
</dbReference>
<dbReference type="PDB" id="7FKK">
    <property type="method" value="X-ray"/>
    <property type="resolution" value="1.63 A"/>
    <property type="chains" value="B=1-317"/>
</dbReference>
<dbReference type="PDB" id="7FKL">
    <property type="method" value="X-ray"/>
    <property type="resolution" value="1.63 A"/>
    <property type="chains" value="B=1-317"/>
</dbReference>
<dbReference type="PDB" id="7FKM">
    <property type="method" value="X-ray"/>
    <property type="resolution" value="1.53 A"/>
    <property type="chains" value="B=1-317"/>
</dbReference>
<dbReference type="PDB" id="7FKN">
    <property type="method" value="X-ray"/>
    <property type="resolution" value="1.55 A"/>
    <property type="chains" value="B=1-317"/>
</dbReference>
<dbReference type="PDB" id="7FKO">
    <property type="method" value="X-ray"/>
    <property type="resolution" value="1.51 A"/>
    <property type="chains" value="B=1-317"/>
</dbReference>
<dbReference type="PDB" id="7FKP">
    <property type="method" value="X-ray"/>
    <property type="resolution" value="1.52 A"/>
    <property type="chains" value="B=1-317"/>
</dbReference>
<dbReference type="PDB" id="7FKQ">
    <property type="method" value="X-ray"/>
    <property type="resolution" value="1.68 A"/>
    <property type="chains" value="B=1-317"/>
</dbReference>
<dbReference type="PDB" id="7FKR">
    <property type="method" value="X-ray"/>
    <property type="resolution" value="1.69 A"/>
    <property type="chains" value="B=1-317"/>
</dbReference>
<dbReference type="PDB" id="7FKS">
    <property type="method" value="X-ray"/>
    <property type="resolution" value="1.58 A"/>
    <property type="chains" value="B=1-317"/>
</dbReference>
<dbReference type="PDB" id="7FKT">
    <property type="method" value="X-ray"/>
    <property type="resolution" value="1.44 A"/>
    <property type="chains" value="B=1-317"/>
</dbReference>
<dbReference type="PDB" id="7FKU">
    <property type="method" value="X-ray"/>
    <property type="resolution" value="1.55 A"/>
    <property type="chains" value="B=1-317"/>
</dbReference>
<dbReference type="PDB" id="7FKV">
    <property type="method" value="X-ray"/>
    <property type="resolution" value="1.75 A"/>
    <property type="chains" value="B=1-317"/>
</dbReference>
<dbReference type="PDB" id="7FKW">
    <property type="method" value="X-ray"/>
    <property type="resolution" value="1.47 A"/>
    <property type="chains" value="B=1-317"/>
</dbReference>
<dbReference type="PDB" id="7FKX">
    <property type="method" value="X-ray"/>
    <property type="resolution" value="1.85 A"/>
    <property type="chains" value="B=1-317"/>
</dbReference>
<dbReference type="PDB" id="7FKY">
    <property type="method" value="X-ray"/>
    <property type="resolution" value="1.59 A"/>
    <property type="chains" value="B=1-317"/>
</dbReference>
<dbReference type="PDB" id="7FKZ">
    <property type="method" value="X-ray"/>
    <property type="resolution" value="1.58 A"/>
    <property type="chains" value="B=1-317"/>
</dbReference>
<dbReference type="PDB" id="7FL0">
    <property type="method" value="X-ray"/>
    <property type="resolution" value="1.51 A"/>
    <property type="chains" value="B=1-317"/>
</dbReference>
<dbReference type="PDB" id="7FL1">
    <property type="method" value="X-ray"/>
    <property type="resolution" value="1.55 A"/>
    <property type="chains" value="B=1-317"/>
</dbReference>
<dbReference type="PDB" id="7FL2">
    <property type="method" value="X-ray"/>
    <property type="resolution" value="1.58 A"/>
    <property type="chains" value="B=1-317"/>
</dbReference>
<dbReference type="PDB" id="7FL3">
    <property type="method" value="X-ray"/>
    <property type="resolution" value="1.51 A"/>
    <property type="chains" value="B=1-317"/>
</dbReference>
<dbReference type="PDB" id="7FL4">
    <property type="method" value="X-ray"/>
    <property type="resolution" value="1.51 A"/>
    <property type="chains" value="B=1-317"/>
</dbReference>
<dbReference type="PDB" id="7FL5">
    <property type="method" value="X-ray"/>
    <property type="resolution" value="1.89 A"/>
    <property type="chains" value="B=1-317"/>
</dbReference>
<dbReference type="PDB" id="7FL6">
    <property type="method" value="X-ray"/>
    <property type="resolution" value="1.58 A"/>
    <property type="chains" value="B=1-317"/>
</dbReference>
<dbReference type="PDB" id="7FL7">
    <property type="method" value="X-ray"/>
    <property type="resolution" value="1.72 A"/>
    <property type="chains" value="B=1-317"/>
</dbReference>
<dbReference type="PDB" id="7FL8">
    <property type="method" value="X-ray"/>
    <property type="resolution" value="1.51 A"/>
    <property type="chains" value="B=1-317"/>
</dbReference>
<dbReference type="PDB" id="7FL9">
    <property type="method" value="X-ray"/>
    <property type="resolution" value="1.59 A"/>
    <property type="chains" value="B=1-317"/>
</dbReference>
<dbReference type="PDB" id="7FLA">
    <property type="method" value="X-ray"/>
    <property type="resolution" value="1.87 A"/>
    <property type="chains" value="B=1-317"/>
</dbReference>
<dbReference type="PDB" id="7FLB">
    <property type="method" value="X-ray"/>
    <property type="resolution" value="1.57 A"/>
    <property type="chains" value="B=1-317"/>
</dbReference>
<dbReference type="PDB" id="7FLC">
    <property type="method" value="X-ray"/>
    <property type="resolution" value="1.95 A"/>
    <property type="chains" value="B=1-317"/>
</dbReference>
<dbReference type="PDB" id="7FLD">
    <property type="method" value="X-ray"/>
    <property type="resolution" value="1.51 A"/>
    <property type="chains" value="B=1-317"/>
</dbReference>
<dbReference type="PDB" id="7FLE">
    <property type="method" value="X-ray"/>
    <property type="resolution" value="1.57 A"/>
    <property type="chains" value="B=1-317"/>
</dbReference>
<dbReference type="PDB" id="7FLF">
    <property type="method" value="X-ray"/>
    <property type="resolution" value="1.54 A"/>
    <property type="chains" value="B=1-317"/>
</dbReference>
<dbReference type="PDB" id="7FLG">
    <property type="method" value="X-ray"/>
    <property type="resolution" value="1.58 A"/>
    <property type="chains" value="B=1-317"/>
</dbReference>
<dbReference type="PDB" id="7FLH">
    <property type="method" value="X-ray"/>
    <property type="resolution" value="1.67 A"/>
    <property type="chains" value="B=1-317"/>
</dbReference>
<dbReference type="PDB" id="7FLI">
    <property type="method" value="X-ray"/>
    <property type="resolution" value="1.75 A"/>
    <property type="chains" value="B=1-317"/>
</dbReference>
<dbReference type="PDB" id="7FLJ">
    <property type="method" value="X-ray"/>
    <property type="resolution" value="1.47 A"/>
    <property type="chains" value="B=1-317"/>
</dbReference>
<dbReference type="PDB" id="7FLK">
    <property type="method" value="X-ray"/>
    <property type="resolution" value="1.62 A"/>
    <property type="chains" value="B=1-317"/>
</dbReference>
<dbReference type="PDB" id="7FLL">
    <property type="method" value="X-ray"/>
    <property type="resolution" value="1.48 A"/>
    <property type="chains" value="B=1-317"/>
</dbReference>
<dbReference type="PDB" id="7FLM">
    <property type="method" value="X-ray"/>
    <property type="resolution" value="1.55 A"/>
    <property type="chains" value="B=1-317"/>
</dbReference>
<dbReference type="PDB" id="7FLN">
    <property type="method" value="X-ray"/>
    <property type="resolution" value="1.57 A"/>
    <property type="chains" value="B=1-317"/>
</dbReference>
<dbReference type="PDB" id="7FLO">
    <property type="method" value="X-ray"/>
    <property type="resolution" value="1.58 A"/>
    <property type="chains" value="B=1-317"/>
</dbReference>
<dbReference type="PDB" id="7FLP">
    <property type="method" value="X-ray"/>
    <property type="resolution" value="1.58 A"/>
    <property type="chains" value="B=1-317"/>
</dbReference>
<dbReference type="PDB" id="7FLQ">
    <property type="method" value="X-ray"/>
    <property type="resolution" value="1.73 A"/>
    <property type="chains" value="B=1-317"/>
</dbReference>
<dbReference type="PDB" id="7FLR">
    <property type="method" value="X-ray"/>
    <property type="resolution" value="1.63 A"/>
    <property type="chains" value="B=1-317"/>
</dbReference>
<dbReference type="PDB" id="7FLS">
    <property type="method" value="X-ray"/>
    <property type="resolution" value="1.51 A"/>
    <property type="chains" value="B=1-317"/>
</dbReference>
<dbReference type="PDB" id="7FLT">
    <property type="method" value="X-ray"/>
    <property type="resolution" value="1.73 A"/>
    <property type="chains" value="B=1-317"/>
</dbReference>
<dbReference type="PDB" id="7FLU">
    <property type="method" value="X-ray"/>
    <property type="resolution" value="1.51 A"/>
    <property type="chains" value="B=1-317"/>
</dbReference>
<dbReference type="PDB" id="7FLV">
    <property type="method" value="X-ray"/>
    <property type="resolution" value="1.51 A"/>
    <property type="chains" value="B=1-317"/>
</dbReference>
<dbReference type="PDB" id="7FLW">
    <property type="method" value="X-ray"/>
    <property type="resolution" value="1.55 A"/>
    <property type="chains" value="B=1-317"/>
</dbReference>
<dbReference type="PDB" id="7FLX">
    <property type="method" value="X-ray"/>
    <property type="resolution" value="1.75 A"/>
    <property type="chains" value="B=1-317"/>
</dbReference>
<dbReference type="PDB" id="7FLY">
    <property type="method" value="X-ray"/>
    <property type="resolution" value="1.55 A"/>
    <property type="chains" value="B=1-317"/>
</dbReference>
<dbReference type="PDB" id="7FLZ">
    <property type="method" value="X-ray"/>
    <property type="resolution" value="1.52 A"/>
    <property type="chains" value="B=1-317"/>
</dbReference>
<dbReference type="PDB" id="7FM0">
    <property type="method" value="X-ray"/>
    <property type="resolution" value="1.61 A"/>
    <property type="chains" value="B=1-317"/>
</dbReference>
<dbReference type="PDB" id="7FM1">
    <property type="method" value="X-ray"/>
    <property type="resolution" value="1.50 A"/>
    <property type="chains" value="B=1-317"/>
</dbReference>
<dbReference type="PDB" id="7FM2">
    <property type="method" value="X-ray"/>
    <property type="resolution" value="1.72 A"/>
    <property type="chains" value="B=1-317"/>
</dbReference>
<dbReference type="PDB" id="7FM3">
    <property type="method" value="X-ray"/>
    <property type="resolution" value="1.65 A"/>
    <property type="chains" value="B=1-317"/>
</dbReference>
<dbReference type="PDB" id="7FM4">
    <property type="method" value="X-ray"/>
    <property type="resolution" value="1.62 A"/>
    <property type="chains" value="B=1-317"/>
</dbReference>
<dbReference type="PDB" id="7FM5">
    <property type="method" value="X-ray"/>
    <property type="resolution" value="1.56 A"/>
    <property type="chains" value="B=1-317"/>
</dbReference>
<dbReference type="PDB" id="7FM6">
    <property type="method" value="X-ray"/>
    <property type="resolution" value="1.55 A"/>
    <property type="chains" value="B=1-317"/>
</dbReference>
<dbReference type="PDB" id="7FM7">
    <property type="method" value="X-ray"/>
    <property type="resolution" value="1.51 A"/>
    <property type="chains" value="B=1-317"/>
</dbReference>
<dbReference type="PDB" id="7FM8">
    <property type="method" value="X-ray"/>
    <property type="resolution" value="1.55 A"/>
    <property type="chains" value="B=1-317"/>
</dbReference>
<dbReference type="PDB" id="7FM9">
    <property type="method" value="X-ray"/>
    <property type="resolution" value="1.59 A"/>
    <property type="chains" value="B=1-317"/>
</dbReference>
<dbReference type="PDB" id="7FMA">
    <property type="method" value="X-ray"/>
    <property type="resolution" value="1.41 A"/>
    <property type="chains" value="B=1-317"/>
</dbReference>
<dbReference type="PDB" id="7FMB">
    <property type="method" value="X-ray"/>
    <property type="resolution" value="1.55 A"/>
    <property type="chains" value="B=1-317"/>
</dbReference>
<dbReference type="PDB" id="7FMC">
    <property type="method" value="X-ray"/>
    <property type="resolution" value="1.51 A"/>
    <property type="chains" value="B=1-317"/>
</dbReference>
<dbReference type="PDB" id="7FMD">
    <property type="method" value="X-ray"/>
    <property type="resolution" value="1.68 A"/>
    <property type="chains" value="B=1-317"/>
</dbReference>
<dbReference type="PDB" id="7FME">
    <property type="method" value="X-ray"/>
    <property type="resolution" value="1.44 A"/>
    <property type="chains" value="B=1-317"/>
</dbReference>
<dbReference type="PDB" id="7FMF">
    <property type="method" value="X-ray"/>
    <property type="resolution" value="1.65 A"/>
    <property type="chains" value="B=1-317"/>
</dbReference>
<dbReference type="PDB" id="7FMG">
    <property type="method" value="X-ray"/>
    <property type="resolution" value="1.71 A"/>
    <property type="chains" value="B=1-317"/>
</dbReference>
<dbReference type="PDB" id="7FMH">
    <property type="method" value="X-ray"/>
    <property type="resolution" value="1.51 A"/>
    <property type="chains" value="B=1-317"/>
</dbReference>
<dbReference type="PDB" id="7FMI">
    <property type="method" value="X-ray"/>
    <property type="resolution" value="1.34 A"/>
    <property type="chains" value="B=1-317"/>
</dbReference>
<dbReference type="PDB" id="7FMJ">
    <property type="method" value="X-ray"/>
    <property type="resolution" value="1.50 A"/>
    <property type="chains" value="B=1-317"/>
</dbReference>
<dbReference type="PDB" id="7FMK">
    <property type="method" value="X-ray"/>
    <property type="resolution" value="1.47 A"/>
    <property type="chains" value="B=1-317"/>
</dbReference>
<dbReference type="PDB" id="7FML">
    <property type="method" value="X-ray"/>
    <property type="resolution" value="1.58 A"/>
    <property type="chains" value="B=1-317"/>
</dbReference>
<dbReference type="PDB" id="7FMM">
    <property type="method" value="X-ray"/>
    <property type="resolution" value="1.69 A"/>
    <property type="chains" value="B=1-317"/>
</dbReference>
<dbReference type="PDB" id="7FMN">
    <property type="method" value="X-ray"/>
    <property type="resolution" value="1.60 A"/>
    <property type="chains" value="B=1-317"/>
</dbReference>
<dbReference type="PDB" id="7FMO">
    <property type="method" value="X-ray"/>
    <property type="resolution" value="1.67 A"/>
    <property type="chains" value="B=1-317"/>
</dbReference>
<dbReference type="PDB" id="7FMP">
    <property type="method" value="X-ray"/>
    <property type="resolution" value="1.72 A"/>
    <property type="chains" value="B=1-317"/>
</dbReference>
<dbReference type="PDB" id="7FMQ">
    <property type="method" value="X-ray"/>
    <property type="resolution" value="1.58 A"/>
    <property type="chains" value="B=1-317"/>
</dbReference>
<dbReference type="PDB" id="7FMR">
    <property type="method" value="X-ray"/>
    <property type="resolution" value="1.58 A"/>
    <property type="chains" value="B=1-317"/>
</dbReference>
<dbReference type="PDB" id="7FMS">
    <property type="method" value="X-ray"/>
    <property type="resolution" value="1.58 A"/>
    <property type="chains" value="B=1-317"/>
</dbReference>
<dbReference type="PDB" id="7FMT">
    <property type="method" value="X-ray"/>
    <property type="resolution" value="1.67 A"/>
    <property type="chains" value="B=1-317"/>
</dbReference>
<dbReference type="PDB" id="7FMU">
    <property type="method" value="X-ray"/>
    <property type="resolution" value="1.81 A"/>
    <property type="chains" value="B=1-317"/>
</dbReference>
<dbReference type="PDB" id="7FMV">
    <property type="method" value="X-ray"/>
    <property type="resolution" value="1.61 A"/>
    <property type="chains" value="B=1-317"/>
</dbReference>
<dbReference type="PDB" id="7FMW">
    <property type="method" value="X-ray"/>
    <property type="resolution" value="1.51 A"/>
    <property type="chains" value="B=1-317"/>
</dbReference>
<dbReference type="PDB" id="7FMX">
    <property type="method" value="X-ray"/>
    <property type="resolution" value="1.51 A"/>
    <property type="chains" value="B=1-317"/>
</dbReference>
<dbReference type="PDB" id="7FMY">
    <property type="method" value="X-ray"/>
    <property type="resolution" value="1.65 A"/>
    <property type="chains" value="B=1-317"/>
</dbReference>
<dbReference type="PDB" id="7FMZ">
    <property type="method" value="X-ray"/>
    <property type="resolution" value="1.67 A"/>
    <property type="chains" value="B=1-317"/>
</dbReference>
<dbReference type="PDB" id="7FN0">
    <property type="method" value="X-ray"/>
    <property type="resolution" value="1.59 A"/>
    <property type="chains" value="B=1-317"/>
</dbReference>
<dbReference type="PDB" id="7FN1">
    <property type="method" value="X-ray"/>
    <property type="resolution" value="1.44 A"/>
    <property type="chains" value="B=1-317"/>
</dbReference>
<dbReference type="PDB" id="7FN2">
    <property type="method" value="X-ray"/>
    <property type="resolution" value="1.62 A"/>
    <property type="chains" value="B=1-317"/>
</dbReference>
<dbReference type="PDB" id="7FN3">
    <property type="method" value="X-ray"/>
    <property type="resolution" value="1.63 A"/>
    <property type="chains" value="B=1-317"/>
</dbReference>
<dbReference type="PDB" id="7FN4">
    <property type="method" value="X-ray"/>
    <property type="resolution" value="1.72 A"/>
    <property type="chains" value="B=1-317"/>
</dbReference>
<dbReference type="PDB" id="7FN5">
    <property type="method" value="X-ray"/>
    <property type="resolution" value="1.69 A"/>
    <property type="chains" value="B=1-317"/>
</dbReference>
<dbReference type="PDB" id="7FN6">
    <property type="method" value="X-ray"/>
    <property type="resolution" value="1.50 A"/>
    <property type="chains" value="B=1-317"/>
</dbReference>
<dbReference type="PDB" id="7FN7">
    <property type="method" value="X-ray"/>
    <property type="resolution" value="1.51 A"/>
    <property type="chains" value="B=1-317"/>
</dbReference>
<dbReference type="PDB" id="7FN8">
    <property type="method" value="X-ray"/>
    <property type="resolution" value="1.41 A"/>
    <property type="chains" value="B=1-317"/>
</dbReference>
<dbReference type="PDB" id="7FN9">
    <property type="method" value="X-ray"/>
    <property type="resolution" value="1.55 A"/>
    <property type="chains" value="B=1-317"/>
</dbReference>
<dbReference type="PDB" id="7FNA">
    <property type="method" value="X-ray"/>
    <property type="resolution" value="1.69 A"/>
    <property type="chains" value="B=1-317"/>
</dbReference>
<dbReference type="PDB" id="7FNB">
    <property type="method" value="X-ray"/>
    <property type="resolution" value="1.55 A"/>
    <property type="chains" value="B=1-317"/>
</dbReference>
<dbReference type="PDB" id="7FNC">
    <property type="method" value="X-ray"/>
    <property type="resolution" value="1.55 A"/>
    <property type="chains" value="B=1-317"/>
</dbReference>
<dbReference type="PDB" id="7FND">
    <property type="method" value="X-ray"/>
    <property type="resolution" value="1.51 A"/>
    <property type="chains" value="B=1-317"/>
</dbReference>
<dbReference type="PDB" id="7FNE">
    <property type="method" value="X-ray"/>
    <property type="resolution" value="1.57 A"/>
    <property type="chains" value="B=1-317"/>
</dbReference>
<dbReference type="PDB" id="7FNF">
    <property type="method" value="X-ray"/>
    <property type="resolution" value="1.54 A"/>
    <property type="chains" value="B=1-317"/>
</dbReference>
<dbReference type="PDB" id="7FNG">
    <property type="method" value="X-ray"/>
    <property type="resolution" value="1.60 A"/>
    <property type="chains" value="B=1-317"/>
</dbReference>
<dbReference type="PDB" id="7FNH">
    <property type="method" value="X-ray"/>
    <property type="resolution" value="1.57 A"/>
    <property type="chains" value="B=1-317"/>
</dbReference>
<dbReference type="PDB" id="7FNI">
    <property type="method" value="X-ray"/>
    <property type="resolution" value="1.55 A"/>
    <property type="chains" value="B=1-317"/>
</dbReference>
<dbReference type="PDB" id="7FNJ">
    <property type="method" value="X-ray"/>
    <property type="resolution" value="1.57 A"/>
    <property type="chains" value="B=1-317"/>
</dbReference>
<dbReference type="PDB" id="7FNK">
    <property type="method" value="X-ray"/>
    <property type="resolution" value="1.57 A"/>
    <property type="chains" value="B=1-317"/>
</dbReference>
<dbReference type="PDB" id="7FNL">
    <property type="method" value="X-ray"/>
    <property type="resolution" value="1.67 A"/>
    <property type="chains" value="B=1-317"/>
</dbReference>
<dbReference type="PDB" id="7FNM">
    <property type="method" value="X-ray"/>
    <property type="resolution" value="1.72 A"/>
    <property type="chains" value="B=1-317"/>
</dbReference>
<dbReference type="PDB" id="7FNN">
    <property type="method" value="X-ray"/>
    <property type="resolution" value="1.65 A"/>
    <property type="chains" value="B=1-317"/>
</dbReference>
<dbReference type="PDB" id="7FNO">
    <property type="method" value="X-ray"/>
    <property type="resolution" value="1.65 A"/>
    <property type="chains" value="B=1-317"/>
</dbReference>
<dbReference type="PDB" id="7FNP">
    <property type="method" value="X-ray"/>
    <property type="resolution" value="1.51 A"/>
    <property type="chains" value="B=1-317"/>
</dbReference>
<dbReference type="PDB" id="7FNQ">
    <property type="method" value="X-ray"/>
    <property type="resolution" value="1.51 A"/>
    <property type="chains" value="B=1-317"/>
</dbReference>
<dbReference type="PDB" id="7FNR">
    <property type="method" value="X-ray"/>
    <property type="resolution" value="1.60 A"/>
    <property type="chains" value="B=1-317"/>
</dbReference>
<dbReference type="PDB" id="7FNS">
    <property type="method" value="X-ray"/>
    <property type="resolution" value="1.45 A"/>
    <property type="chains" value="B=1-317"/>
</dbReference>
<dbReference type="PDB" id="7FNT">
    <property type="method" value="X-ray"/>
    <property type="resolution" value="1.61 A"/>
    <property type="chains" value="B=1-317"/>
</dbReference>
<dbReference type="PDB" id="7FNU">
    <property type="method" value="X-ray"/>
    <property type="resolution" value="1.54 A"/>
    <property type="chains" value="B=1-317"/>
</dbReference>
<dbReference type="PDB" id="7FNV">
    <property type="method" value="X-ray"/>
    <property type="resolution" value="1.54 A"/>
    <property type="chains" value="B=1-317"/>
</dbReference>
<dbReference type="PDB" id="7FNW">
    <property type="method" value="X-ray"/>
    <property type="resolution" value="1.90 A"/>
    <property type="chains" value="B=1-317"/>
</dbReference>
<dbReference type="PDB" id="7FNX">
    <property type="method" value="X-ray"/>
    <property type="resolution" value="1.72 A"/>
    <property type="chains" value="B=1-317"/>
</dbReference>
<dbReference type="PDB" id="7FNY">
    <property type="method" value="X-ray"/>
    <property type="resolution" value="1.71 A"/>
    <property type="chains" value="B=1-317"/>
</dbReference>
<dbReference type="PDB" id="7FNZ">
    <property type="method" value="X-ray"/>
    <property type="resolution" value="1.66 A"/>
    <property type="chains" value="B=1-317"/>
</dbReference>
<dbReference type="PDB" id="7FO0">
    <property type="method" value="X-ray"/>
    <property type="resolution" value="1.83 A"/>
    <property type="chains" value="B=1-317"/>
</dbReference>
<dbReference type="PDB" id="7FO1">
    <property type="method" value="X-ray"/>
    <property type="resolution" value="1.50 A"/>
    <property type="chains" value="B=1-317"/>
</dbReference>
<dbReference type="PDB" id="7FO2">
    <property type="method" value="X-ray"/>
    <property type="resolution" value="2.01 A"/>
    <property type="chains" value="B=1-317"/>
</dbReference>
<dbReference type="PDB" id="7FO3">
    <property type="method" value="X-ray"/>
    <property type="resolution" value="1.59 A"/>
    <property type="chains" value="B=1-317"/>
</dbReference>
<dbReference type="PDB" id="7FO4">
    <property type="method" value="X-ray"/>
    <property type="resolution" value="1.53 A"/>
    <property type="chains" value="B=1-317"/>
</dbReference>
<dbReference type="PDB" id="7FO5">
    <property type="method" value="X-ray"/>
    <property type="resolution" value="1.71 A"/>
    <property type="chains" value="B=1-317"/>
</dbReference>
<dbReference type="PDB" id="7FO6">
    <property type="method" value="X-ray"/>
    <property type="resolution" value="1.57 A"/>
    <property type="chains" value="B=1-317"/>
</dbReference>
<dbReference type="PDB" id="7FO7">
    <property type="method" value="X-ray"/>
    <property type="resolution" value="1.45 A"/>
    <property type="chains" value="B=1-317"/>
</dbReference>
<dbReference type="PDB" id="7FO8">
    <property type="method" value="X-ray"/>
    <property type="resolution" value="1.72 A"/>
    <property type="chains" value="B=1-317"/>
</dbReference>
<dbReference type="PDB" id="7FO9">
    <property type="method" value="X-ray"/>
    <property type="resolution" value="1.67 A"/>
    <property type="chains" value="B=1-317"/>
</dbReference>
<dbReference type="PDB" id="7FOA">
    <property type="method" value="X-ray"/>
    <property type="resolution" value="1.67 A"/>
    <property type="chains" value="B=1-317"/>
</dbReference>
<dbReference type="PDB" id="7FOB">
    <property type="method" value="X-ray"/>
    <property type="resolution" value="1.72 A"/>
    <property type="chains" value="B=1-317"/>
</dbReference>
<dbReference type="PDB" id="7FOC">
    <property type="method" value="X-ray"/>
    <property type="resolution" value="1.90 A"/>
    <property type="chains" value="B=1-317"/>
</dbReference>
<dbReference type="PDB" id="7FOD">
    <property type="method" value="X-ray"/>
    <property type="resolution" value="1.59 A"/>
    <property type="chains" value="B=1-317"/>
</dbReference>
<dbReference type="PDB" id="7FOE">
    <property type="method" value="X-ray"/>
    <property type="resolution" value="1.65 A"/>
    <property type="chains" value="B=1-317"/>
</dbReference>
<dbReference type="PDB" id="7FOF">
    <property type="method" value="X-ray"/>
    <property type="resolution" value="1.77 A"/>
    <property type="chains" value="B=1-317"/>
</dbReference>
<dbReference type="PDB" id="7FOG">
    <property type="method" value="X-ray"/>
    <property type="resolution" value="1.41 A"/>
    <property type="chains" value="B=1-317"/>
</dbReference>
<dbReference type="PDB" id="7FOH">
    <property type="method" value="X-ray"/>
    <property type="resolution" value="1.69 A"/>
    <property type="chains" value="B=1-317"/>
</dbReference>
<dbReference type="PDB" id="7FOI">
    <property type="method" value="X-ray"/>
    <property type="resolution" value="1.55 A"/>
    <property type="chains" value="B=1-317"/>
</dbReference>
<dbReference type="PDB" id="7FOJ">
    <property type="method" value="X-ray"/>
    <property type="resolution" value="1.65 A"/>
    <property type="chains" value="B=1-317"/>
</dbReference>
<dbReference type="PDB" id="7FOK">
    <property type="method" value="X-ray"/>
    <property type="resolution" value="1.72 A"/>
    <property type="chains" value="B=1-317"/>
</dbReference>
<dbReference type="PDB" id="7FOL">
    <property type="method" value="X-ray"/>
    <property type="resolution" value="1.55 A"/>
    <property type="chains" value="B=1-317"/>
</dbReference>
<dbReference type="PDB" id="7FOM">
    <property type="method" value="X-ray"/>
    <property type="resolution" value="1.51 A"/>
    <property type="chains" value="B=1-317"/>
</dbReference>
<dbReference type="PDB" id="7FON">
    <property type="method" value="X-ray"/>
    <property type="resolution" value="1.51 A"/>
    <property type="chains" value="B=1-317"/>
</dbReference>
<dbReference type="PDB" id="7FOO">
    <property type="method" value="X-ray"/>
    <property type="resolution" value="1.59 A"/>
    <property type="chains" value="B=1-317"/>
</dbReference>
<dbReference type="PDB" id="7FOP">
    <property type="method" value="X-ray"/>
    <property type="resolution" value="1.66 A"/>
    <property type="chains" value="B=1-317"/>
</dbReference>
<dbReference type="PDB" id="7FOQ">
    <property type="method" value="X-ray"/>
    <property type="resolution" value="1.74 A"/>
    <property type="chains" value="B=1-317"/>
</dbReference>
<dbReference type="PDB" id="7FOR">
    <property type="method" value="X-ray"/>
    <property type="resolution" value="2.03 A"/>
    <property type="chains" value="B=1-317"/>
</dbReference>
<dbReference type="PDB" id="7FOS">
    <property type="method" value="X-ray"/>
    <property type="resolution" value="1.67 A"/>
    <property type="chains" value="B=1-317"/>
</dbReference>
<dbReference type="PDB" id="7FOT">
    <property type="method" value="X-ray"/>
    <property type="resolution" value="1.56 A"/>
    <property type="chains" value="B=1-317"/>
</dbReference>
<dbReference type="PDB" id="7FOU">
    <property type="method" value="X-ray"/>
    <property type="resolution" value="1.59 A"/>
    <property type="chains" value="B=1-317"/>
</dbReference>
<dbReference type="PDB" id="7FOV">
    <property type="method" value="X-ray"/>
    <property type="resolution" value="1.48 A"/>
    <property type="chains" value="B=1-317"/>
</dbReference>
<dbReference type="PDB" id="7FOW">
    <property type="method" value="X-ray"/>
    <property type="resolution" value="1.51 A"/>
    <property type="chains" value="B=1-317"/>
</dbReference>
<dbReference type="PDB" id="7FOX">
    <property type="method" value="X-ray"/>
    <property type="resolution" value="1.47 A"/>
    <property type="chains" value="B=1-317"/>
</dbReference>
<dbReference type="PDB" id="7FOY">
    <property type="method" value="X-ray"/>
    <property type="resolution" value="1.55 A"/>
    <property type="chains" value="B=1-317"/>
</dbReference>
<dbReference type="PDB" id="7FOZ">
    <property type="method" value="X-ray"/>
    <property type="resolution" value="1.83 A"/>
    <property type="chains" value="B=1-317"/>
</dbReference>
<dbReference type="PDB" id="7FP0">
    <property type="method" value="X-ray"/>
    <property type="resolution" value="1.54 A"/>
    <property type="chains" value="B=1-317"/>
</dbReference>
<dbReference type="PDB" id="7FP1">
    <property type="method" value="X-ray"/>
    <property type="resolution" value="1.43 A"/>
    <property type="chains" value="B=1-317"/>
</dbReference>
<dbReference type="PDB" id="7FP2">
    <property type="method" value="X-ray"/>
    <property type="resolution" value="1.64 A"/>
    <property type="chains" value="B=1-317"/>
</dbReference>
<dbReference type="PDB" id="7FP3">
    <property type="method" value="X-ray"/>
    <property type="resolution" value="1.76 A"/>
    <property type="chains" value="B=1-317"/>
</dbReference>
<dbReference type="PDB" id="7FP4">
    <property type="method" value="X-ray"/>
    <property type="resolution" value="1.45 A"/>
    <property type="chains" value="B=1-317"/>
</dbReference>
<dbReference type="PDB" id="7FP5">
    <property type="method" value="X-ray"/>
    <property type="resolution" value="1.53 A"/>
    <property type="chains" value="B=1-317"/>
</dbReference>
<dbReference type="PDB" id="7FP6">
    <property type="method" value="X-ray"/>
    <property type="resolution" value="1.61 A"/>
    <property type="chains" value="B=1-317"/>
</dbReference>
<dbReference type="PDB" id="7FP7">
    <property type="method" value="X-ray"/>
    <property type="resolution" value="1.47 A"/>
    <property type="chains" value="B=1-317"/>
</dbReference>
<dbReference type="PDB" id="7FP8">
    <property type="method" value="X-ray"/>
    <property type="resolution" value="1.59 A"/>
    <property type="chains" value="B=1-317"/>
</dbReference>
<dbReference type="PDB" id="7FP9">
    <property type="method" value="X-ray"/>
    <property type="resolution" value="1.90 A"/>
    <property type="chains" value="B=1-317"/>
</dbReference>
<dbReference type="PDB" id="7FPA">
    <property type="method" value="X-ray"/>
    <property type="resolution" value="1.86 A"/>
    <property type="chains" value="B=1-317"/>
</dbReference>
<dbReference type="PDB" id="7FPB">
    <property type="method" value="X-ray"/>
    <property type="resolution" value="2.02 A"/>
    <property type="chains" value="B=1-317"/>
</dbReference>
<dbReference type="PDB" id="7FPC">
    <property type="method" value="X-ray"/>
    <property type="resolution" value="1.55 A"/>
    <property type="chains" value="B=1-317"/>
</dbReference>
<dbReference type="PDB" id="7FPD">
    <property type="method" value="X-ray"/>
    <property type="resolution" value="1.61 A"/>
    <property type="chains" value="B=1-317"/>
</dbReference>
<dbReference type="PDB" id="7FPE">
    <property type="method" value="X-ray"/>
    <property type="resolution" value="1.55 A"/>
    <property type="chains" value="B=1-317"/>
</dbReference>
<dbReference type="PDB" id="7FPF">
    <property type="method" value="X-ray"/>
    <property type="resolution" value="1.55 A"/>
    <property type="chains" value="B=1-317"/>
</dbReference>
<dbReference type="PDB" id="7FPG">
    <property type="method" value="X-ray"/>
    <property type="resolution" value="1.60 A"/>
    <property type="chains" value="B=1-317"/>
</dbReference>
<dbReference type="PDB" id="7FPH">
    <property type="method" value="X-ray"/>
    <property type="resolution" value="1.91 A"/>
    <property type="chains" value="B=1-317"/>
</dbReference>
<dbReference type="PDB" id="7FPI">
    <property type="method" value="X-ray"/>
    <property type="resolution" value="1.63 A"/>
    <property type="chains" value="B=1-317"/>
</dbReference>
<dbReference type="PDB" id="7FPJ">
    <property type="method" value="X-ray"/>
    <property type="resolution" value="1.59 A"/>
    <property type="chains" value="B=1-317"/>
</dbReference>
<dbReference type="PDB" id="7FPK">
    <property type="method" value="X-ray"/>
    <property type="resolution" value="1.59 A"/>
    <property type="chains" value="B=1-317"/>
</dbReference>
<dbReference type="PDBsum" id="3SBS"/>
<dbReference type="PDBsum" id="3SBT"/>
<dbReference type="PDBsum" id="3ZEF"/>
<dbReference type="PDBsum" id="4I43"/>
<dbReference type="PDBsum" id="4ILG"/>
<dbReference type="PDBsum" id="4ILH"/>
<dbReference type="PDBsum" id="4ILI"/>
<dbReference type="PDBsum" id="5QY1"/>
<dbReference type="PDBsum" id="5QY2"/>
<dbReference type="PDBsum" id="5QY3"/>
<dbReference type="PDBsum" id="5QY4"/>
<dbReference type="PDBsum" id="5QY5"/>
<dbReference type="PDBsum" id="5QY6"/>
<dbReference type="PDBsum" id="5QY7"/>
<dbReference type="PDBsum" id="5QY8"/>
<dbReference type="PDBsum" id="5QY9"/>
<dbReference type="PDBsum" id="5QYA"/>
<dbReference type="PDBsum" id="5QYB"/>
<dbReference type="PDBsum" id="5QYC"/>
<dbReference type="PDBsum" id="5QYD"/>
<dbReference type="PDBsum" id="5QYE"/>
<dbReference type="PDBsum" id="5QYF"/>
<dbReference type="PDBsum" id="5QYG"/>
<dbReference type="PDBsum" id="5QYH"/>
<dbReference type="PDBsum" id="5QYI"/>
<dbReference type="PDBsum" id="5QYJ"/>
<dbReference type="PDBsum" id="5QYK"/>
<dbReference type="PDBsum" id="5QYL"/>
<dbReference type="PDBsum" id="5QYM"/>
<dbReference type="PDBsum" id="5QYN"/>
<dbReference type="PDBsum" id="5QYO"/>
<dbReference type="PDBsum" id="5QYP"/>
<dbReference type="PDBsum" id="5QYQ"/>
<dbReference type="PDBsum" id="5QYR"/>
<dbReference type="PDBsum" id="5QYS"/>
<dbReference type="PDBsum" id="5QYT"/>
<dbReference type="PDBsum" id="5QYU"/>
<dbReference type="PDBsum" id="5QYV"/>
<dbReference type="PDBsum" id="5QYW"/>
<dbReference type="PDBsum" id="5QYX"/>
<dbReference type="PDBsum" id="5QYY"/>
<dbReference type="PDBsum" id="5QYZ"/>
<dbReference type="PDBsum" id="5QZ0"/>
<dbReference type="PDBsum" id="5QZ1"/>
<dbReference type="PDBsum" id="5QZ2"/>
<dbReference type="PDBsum" id="5QZ3"/>
<dbReference type="PDBsum" id="5QZ4"/>
<dbReference type="PDBsum" id="5QZ5"/>
<dbReference type="PDBsum" id="5QZ6"/>
<dbReference type="PDBsum" id="5QZ7"/>
<dbReference type="PDBsum" id="5QZ8"/>
<dbReference type="PDBsum" id="5QZ9"/>
<dbReference type="PDBsum" id="5QZA"/>
<dbReference type="PDBsum" id="5QZB"/>
<dbReference type="PDBsum" id="5QZC"/>
<dbReference type="PDBsum" id="5QZD"/>
<dbReference type="PDBsum" id="5QZE"/>
<dbReference type="PDBsum" id="5QZF"/>
<dbReference type="PDBsum" id="5QZG"/>
<dbReference type="PDBsum" id="5QZH"/>
<dbReference type="PDBsum" id="5QZI"/>
<dbReference type="PDBsum" id="5QZJ"/>
<dbReference type="PDBsum" id="5QZK"/>
<dbReference type="PDBsum" id="5QZL"/>
<dbReference type="PDBsum" id="5QZM"/>
<dbReference type="PDBsum" id="5QZN"/>
<dbReference type="PDBsum" id="5QZO"/>
<dbReference type="PDBsum" id="5QZP"/>
<dbReference type="PDBsum" id="5QZQ"/>
<dbReference type="PDBsum" id="5QZR"/>
<dbReference type="PDBsum" id="5QZS"/>
<dbReference type="PDBsum" id="5QZT"/>
<dbReference type="PDBsum" id="5QZU"/>
<dbReference type="PDBsum" id="5QZV"/>
<dbReference type="PDBsum" id="5QZW"/>
<dbReference type="PDBsum" id="5QZX"/>
<dbReference type="PDBsum" id="5QZY"/>
<dbReference type="PDBsum" id="5QZZ"/>
<dbReference type="PDBsum" id="5R00"/>
<dbReference type="PDBsum" id="5R01"/>
<dbReference type="PDBsum" id="5R02"/>
<dbReference type="PDBsum" id="5R03"/>
<dbReference type="PDBsum" id="5R04"/>
<dbReference type="PDBsum" id="5R05"/>
<dbReference type="PDBsum" id="5R06"/>
<dbReference type="PDBsum" id="5R07"/>
<dbReference type="PDBsum" id="5R08"/>
<dbReference type="PDBsum" id="5R09"/>
<dbReference type="PDBsum" id="5R0A"/>
<dbReference type="PDBsum" id="5R0B"/>
<dbReference type="PDBsum" id="5R0C"/>
<dbReference type="PDBsum" id="5R0D"/>
<dbReference type="PDBsum" id="5R0E"/>
<dbReference type="PDBsum" id="5R0F"/>
<dbReference type="PDBsum" id="5R0G"/>
<dbReference type="PDBsum" id="5R0H"/>
<dbReference type="PDBsum" id="5R0I"/>
<dbReference type="PDBsum" id="5R0J"/>
<dbReference type="PDBsum" id="5R0K"/>
<dbReference type="PDBsum" id="5R0L"/>
<dbReference type="PDBsum" id="5R0M"/>
<dbReference type="PDBsum" id="5R0N"/>
<dbReference type="PDBsum" id="5R0O"/>
<dbReference type="PDBsum" id="5R0P"/>
<dbReference type="PDBsum" id="5R0Q"/>
<dbReference type="PDBsum" id="5R0R"/>
<dbReference type="PDBsum" id="5R0S"/>
<dbReference type="PDBsum" id="5R0T"/>
<dbReference type="PDBsum" id="5R0U"/>
<dbReference type="PDBsum" id="5R0V"/>
<dbReference type="PDBsum" id="5R0W"/>
<dbReference type="PDBsum" id="5R0X"/>
<dbReference type="PDBsum" id="5R0Y"/>
<dbReference type="PDBsum" id="5R0Z"/>
<dbReference type="PDBsum" id="5R10"/>
<dbReference type="PDBsum" id="5R11"/>
<dbReference type="PDBsum" id="5R12"/>
<dbReference type="PDBsum" id="5R13"/>
<dbReference type="PDBsum" id="5R14"/>
<dbReference type="PDBsum" id="5R15"/>
<dbReference type="PDBsum" id="5R16"/>
<dbReference type="PDBsum" id="5R17"/>
<dbReference type="PDBsum" id="5R18"/>
<dbReference type="PDBsum" id="5R19"/>
<dbReference type="PDBsum" id="5R1A"/>
<dbReference type="PDBsum" id="5R1B"/>
<dbReference type="PDBsum" id="5R1C"/>
<dbReference type="PDBsum" id="5R1D"/>
<dbReference type="PDBsum" id="5R1E"/>
<dbReference type="PDBsum" id="5R1F"/>
<dbReference type="PDBsum" id="5R1G"/>
<dbReference type="PDBsum" id="5R1H"/>
<dbReference type="PDBsum" id="5R1I"/>
<dbReference type="PDBsum" id="5R1J"/>
<dbReference type="PDBsum" id="5R1K"/>
<dbReference type="PDBsum" id="5R1L"/>
<dbReference type="PDBsum" id="5R1M"/>
<dbReference type="PDBsum" id="5R1N"/>
<dbReference type="PDBsum" id="5R1O"/>
<dbReference type="PDBsum" id="5R1P"/>
<dbReference type="PDBsum" id="5R1Q"/>
<dbReference type="PDBsum" id="5R1S"/>
<dbReference type="PDBsum" id="5ST0"/>
<dbReference type="PDBsum" id="5ST1"/>
<dbReference type="PDBsum" id="5ST2"/>
<dbReference type="PDBsum" id="5ST3"/>
<dbReference type="PDBsum" id="5ST4"/>
<dbReference type="PDBsum" id="5ST5"/>
<dbReference type="PDBsum" id="5ST6"/>
<dbReference type="PDBsum" id="5ST7"/>
<dbReference type="PDBsum" id="5ST8"/>
<dbReference type="PDBsum" id="5ST9"/>
<dbReference type="PDBsum" id="5STA"/>
<dbReference type="PDBsum" id="5STB"/>
<dbReference type="PDBsum" id="5STC"/>
<dbReference type="PDBsum" id="5STE"/>
<dbReference type="PDBsum" id="5STF"/>
<dbReference type="PDBsum" id="5STG"/>
<dbReference type="PDBsum" id="5STH"/>
<dbReference type="PDBsum" id="5STI"/>
<dbReference type="PDBsum" id="5STJ"/>
<dbReference type="PDBsum" id="5STK"/>
<dbReference type="PDBsum" id="5STL"/>
<dbReference type="PDBsum" id="5STM"/>
<dbReference type="PDBsum" id="5STN"/>
<dbReference type="PDBsum" id="5STO"/>
<dbReference type="PDBsum" id="5STP"/>
<dbReference type="PDBsum" id="5STQ"/>
<dbReference type="PDBsum" id="5STR"/>
<dbReference type="PDBsum" id="5STS"/>
<dbReference type="PDBsum" id="5STT"/>
<dbReference type="PDBsum" id="5STU"/>
<dbReference type="PDBsum" id="5STV"/>
<dbReference type="PDBsum" id="5STW"/>
<dbReference type="PDBsum" id="5STX"/>
<dbReference type="PDBsum" id="5STY"/>
<dbReference type="PDBsum" id="5STZ"/>
<dbReference type="PDBsum" id="5SU0"/>
<dbReference type="PDBsum" id="5SU1"/>
<dbReference type="PDBsum" id="5SU2"/>
<dbReference type="PDBsum" id="5SU3"/>
<dbReference type="PDBsum" id="5SU4"/>
<dbReference type="PDBsum" id="5SU5"/>
<dbReference type="PDBsum" id="5SU6"/>
<dbReference type="PDBsum" id="5SU7"/>
<dbReference type="PDBsum" id="5SU8"/>
<dbReference type="PDBsum" id="5SU9"/>
<dbReference type="PDBsum" id="5SUA"/>
<dbReference type="PDBsum" id="5SUB"/>
<dbReference type="PDBsum" id="5SUC"/>
<dbReference type="PDBsum" id="5SUD"/>
<dbReference type="PDBsum" id="5SUE"/>
<dbReference type="PDBsum" id="5SUF"/>
<dbReference type="PDBsum" id="5SUG"/>
<dbReference type="PDBsum" id="7FJU"/>
<dbReference type="PDBsum" id="7FJV"/>
<dbReference type="PDBsum" id="7FJW"/>
<dbReference type="PDBsum" id="7FJX"/>
<dbReference type="PDBsum" id="7FJY"/>
<dbReference type="PDBsum" id="7FJZ"/>
<dbReference type="PDBsum" id="7FK0"/>
<dbReference type="PDBsum" id="7FK1"/>
<dbReference type="PDBsum" id="7FK2"/>
<dbReference type="PDBsum" id="7FK3"/>
<dbReference type="PDBsum" id="7FK4"/>
<dbReference type="PDBsum" id="7FK5"/>
<dbReference type="PDBsum" id="7FK6"/>
<dbReference type="PDBsum" id="7FK7"/>
<dbReference type="PDBsum" id="7FK8"/>
<dbReference type="PDBsum" id="7FK9"/>
<dbReference type="PDBsum" id="7FKA"/>
<dbReference type="PDBsum" id="7FKB"/>
<dbReference type="PDBsum" id="7FKC"/>
<dbReference type="PDBsum" id="7FKD"/>
<dbReference type="PDBsum" id="7FKE"/>
<dbReference type="PDBsum" id="7FKF"/>
<dbReference type="PDBsum" id="7FKG"/>
<dbReference type="PDBsum" id="7FKH"/>
<dbReference type="PDBsum" id="7FKI"/>
<dbReference type="PDBsum" id="7FKJ"/>
<dbReference type="PDBsum" id="7FKK"/>
<dbReference type="PDBsum" id="7FKL"/>
<dbReference type="PDBsum" id="7FKM"/>
<dbReference type="PDBsum" id="7FKN"/>
<dbReference type="PDBsum" id="7FKO"/>
<dbReference type="PDBsum" id="7FKP"/>
<dbReference type="PDBsum" id="7FKQ"/>
<dbReference type="PDBsum" id="7FKR"/>
<dbReference type="PDBsum" id="7FKS"/>
<dbReference type="PDBsum" id="7FKT"/>
<dbReference type="PDBsum" id="7FKU"/>
<dbReference type="PDBsum" id="7FKV"/>
<dbReference type="PDBsum" id="7FKW"/>
<dbReference type="PDBsum" id="7FKX"/>
<dbReference type="PDBsum" id="7FKY"/>
<dbReference type="PDBsum" id="7FKZ"/>
<dbReference type="PDBsum" id="7FL0"/>
<dbReference type="PDBsum" id="7FL1"/>
<dbReference type="PDBsum" id="7FL2"/>
<dbReference type="PDBsum" id="7FL3"/>
<dbReference type="PDBsum" id="7FL4"/>
<dbReference type="PDBsum" id="7FL5"/>
<dbReference type="PDBsum" id="7FL6"/>
<dbReference type="PDBsum" id="7FL7"/>
<dbReference type="PDBsum" id="7FL8"/>
<dbReference type="PDBsum" id="7FL9"/>
<dbReference type="PDBsum" id="7FLA"/>
<dbReference type="PDBsum" id="7FLB"/>
<dbReference type="PDBsum" id="7FLC"/>
<dbReference type="PDBsum" id="7FLD"/>
<dbReference type="PDBsum" id="7FLE"/>
<dbReference type="PDBsum" id="7FLF"/>
<dbReference type="PDBsum" id="7FLG"/>
<dbReference type="PDBsum" id="7FLH"/>
<dbReference type="PDBsum" id="7FLI"/>
<dbReference type="PDBsum" id="7FLJ"/>
<dbReference type="PDBsum" id="7FLK"/>
<dbReference type="PDBsum" id="7FLL"/>
<dbReference type="PDBsum" id="7FLM"/>
<dbReference type="PDBsum" id="7FLN"/>
<dbReference type="PDBsum" id="7FLO"/>
<dbReference type="PDBsum" id="7FLP"/>
<dbReference type="PDBsum" id="7FLQ"/>
<dbReference type="PDBsum" id="7FLR"/>
<dbReference type="PDBsum" id="7FLS"/>
<dbReference type="PDBsum" id="7FLT"/>
<dbReference type="PDBsum" id="7FLU"/>
<dbReference type="PDBsum" id="7FLV"/>
<dbReference type="PDBsum" id="7FLW"/>
<dbReference type="PDBsum" id="7FLX"/>
<dbReference type="PDBsum" id="7FLY"/>
<dbReference type="PDBsum" id="7FLZ"/>
<dbReference type="PDBsum" id="7FM0"/>
<dbReference type="PDBsum" id="7FM1"/>
<dbReference type="PDBsum" id="7FM2"/>
<dbReference type="PDBsum" id="7FM3"/>
<dbReference type="PDBsum" id="7FM4"/>
<dbReference type="PDBsum" id="7FM5"/>
<dbReference type="PDBsum" id="7FM6"/>
<dbReference type="PDBsum" id="7FM7"/>
<dbReference type="PDBsum" id="7FM8"/>
<dbReference type="PDBsum" id="7FM9"/>
<dbReference type="PDBsum" id="7FMA"/>
<dbReference type="PDBsum" id="7FMB"/>
<dbReference type="PDBsum" id="7FMC"/>
<dbReference type="PDBsum" id="7FMD"/>
<dbReference type="PDBsum" id="7FME"/>
<dbReference type="PDBsum" id="7FMF"/>
<dbReference type="PDBsum" id="7FMG"/>
<dbReference type="PDBsum" id="7FMH"/>
<dbReference type="PDBsum" id="7FMI"/>
<dbReference type="PDBsum" id="7FMJ"/>
<dbReference type="PDBsum" id="7FMK"/>
<dbReference type="PDBsum" id="7FML"/>
<dbReference type="PDBsum" id="7FMM"/>
<dbReference type="PDBsum" id="7FMN"/>
<dbReference type="PDBsum" id="7FMO"/>
<dbReference type="PDBsum" id="7FMP"/>
<dbReference type="PDBsum" id="7FMQ"/>
<dbReference type="PDBsum" id="7FMR"/>
<dbReference type="PDBsum" id="7FMS"/>
<dbReference type="PDBsum" id="7FMT"/>
<dbReference type="PDBsum" id="7FMU"/>
<dbReference type="PDBsum" id="7FMV"/>
<dbReference type="PDBsum" id="7FMW"/>
<dbReference type="PDBsum" id="7FMX"/>
<dbReference type="PDBsum" id="7FMY"/>
<dbReference type="PDBsum" id="7FMZ"/>
<dbReference type="PDBsum" id="7FN0"/>
<dbReference type="PDBsum" id="7FN1"/>
<dbReference type="PDBsum" id="7FN2"/>
<dbReference type="PDBsum" id="7FN3"/>
<dbReference type="PDBsum" id="7FN4"/>
<dbReference type="PDBsum" id="7FN5"/>
<dbReference type="PDBsum" id="7FN6"/>
<dbReference type="PDBsum" id="7FN7"/>
<dbReference type="PDBsum" id="7FN8"/>
<dbReference type="PDBsum" id="7FN9"/>
<dbReference type="PDBsum" id="7FNA"/>
<dbReference type="PDBsum" id="7FNB"/>
<dbReference type="PDBsum" id="7FNC"/>
<dbReference type="PDBsum" id="7FND"/>
<dbReference type="PDBsum" id="7FNE"/>
<dbReference type="PDBsum" id="7FNF"/>
<dbReference type="PDBsum" id="7FNG"/>
<dbReference type="PDBsum" id="7FNH"/>
<dbReference type="PDBsum" id="7FNI"/>
<dbReference type="PDBsum" id="7FNJ"/>
<dbReference type="PDBsum" id="7FNK"/>
<dbReference type="PDBsum" id="7FNL"/>
<dbReference type="PDBsum" id="7FNM"/>
<dbReference type="PDBsum" id="7FNN"/>
<dbReference type="PDBsum" id="7FNO"/>
<dbReference type="PDBsum" id="7FNP"/>
<dbReference type="PDBsum" id="7FNQ"/>
<dbReference type="PDBsum" id="7FNR"/>
<dbReference type="PDBsum" id="7FNS"/>
<dbReference type="PDBsum" id="7FNT"/>
<dbReference type="PDBsum" id="7FNU"/>
<dbReference type="PDBsum" id="7FNV"/>
<dbReference type="PDBsum" id="7FNW"/>
<dbReference type="PDBsum" id="7FNX"/>
<dbReference type="PDBsum" id="7FNY"/>
<dbReference type="PDBsum" id="7FNZ"/>
<dbReference type="PDBsum" id="7FO0"/>
<dbReference type="PDBsum" id="7FO1"/>
<dbReference type="PDBsum" id="7FO2"/>
<dbReference type="PDBsum" id="7FO3"/>
<dbReference type="PDBsum" id="7FO4"/>
<dbReference type="PDBsum" id="7FO5"/>
<dbReference type="PDBsum" id="7FO6"/>
<dbReference type="PDBsum" id="7FO7"/>
<dbReference type="PDBsum" id="7FO8"/>
<dbReference type="PDBsum" id="7FO9"/>
<dbReference type="PDBsum" id="7FOA"/>
<dbReference type="PDBsum" id="7FOB"/>
<dbReference type="PDBsum" id="7FOC"/>
<dbReference type="PDBsum" id="7FOD"/>
<dbReference type="PDBsum" id="7FOE"/>
<dbReference type="PDBsum" id="7FOF"/>
<dbReference type="PDBsum" id="7FOG"/>
<dbReference type="PDBsum" id="7FOH"/>
<dbReference type="PDBsum" id="7FOI"/>
<dbReference type="PDBsum" id="7FOJ"/>
<dbReference type="PDBsum" id="7FOK"/>
<dbReference type="PDBsum" id="7FOL"/>
<dbReference type="PDBsum" id="7FOM"/>
<dbReference type="PDBsum" id="7FON"/>
<dbReference type="PDBsum" id="7FOO"/>
<dbReference type="PDBsum" id="7FOP"/>
<dbReference type="PDBsum" id="7FOQ"/>
<dbReference type="PDBsum" id="7FOR"/>
<dbReference type="PDBsum" id="7FOS"/>
<dbReference type="PDBsum" id="7FOT"/>
<dbReference type="PDBsum" id="7FOU"/>
<dbReference type="PDBsum" id="7FOV"/>
<dbReference type="PDBsum" id="7FOW"/>
<dbReference type="PDBsum" id="7FOX"/>
<dbReference type="PDBsum" id="7FOY"/>
<dbReference type="PDBsum" id="7FOZ"/>
<dbReference type="PDBsum" id="7FP0"/>
<dbReference type="PDBsum" id="7FP1"/>
<dbReference type="PDBsum" id="7FP2"/>
<dbReference type="PDBsum" id="7FP3"/>
<dbReference type="PDBsum" id="7FP4"/>
<dbReference type="PDBsum" id="7FP5"/>
<dbReference type="PDBsum" id="7FP6"/>
<dbReference type="PDBsum" id="7FP7"/>
<dbReference type="PDBsum" id="7FP8"/>
<dbReference type="PDBsum" id="7FP9"/>
<dbReference type="PDBsum" id="7FPA"/>
<dbReference type="PDBsum" id="7FPB"/>
<dbReference type="PDBsum" id="7FPC"/>
<dbReference type="PDBsum" id="7FPD"/>
<dbReference type="PDBsum" id="7FPE"/>
<dbReference type="PDBsum" id="7FPF"/>
<dbReference type="PDBsum" id="7FPG"/>
<dbReference type="PDBsum" id="7FPH"/>
<dbReference type="PDBsum" id="7FPI"/>
<dbReference type="PDBsum" id="7FPJ"/>
<dbReference type="PDBsum" id="7FPK"/>
<dbReference type="SMR" id="P32357"/>
<dbReference type="BioGRID" id="32628">
    <property type="interactions" value="316"/>
</dbReference>
<dbReference type="ComplexPortal" id="CPX-30">
    <property type="entry name" value="U5 small nuclear ribonucleoprotein complex, AAR2 variant"/>
</dbReference>
<dbReference type="DIP" id="DIP-6642N"/>
<dbReference type="FunCoup" id="P32357">
    <property type="interactions" value="607"/>
</dbReference>
<dbReference type="IntAct" id="P32357">
    <property type="interactions" value="9"/>
</dbReference>
<dbReference type="MINT" id="P32357"/>
<dbReference type="STRING" id="4932.YBL074C"/>
<dbReference type="iPTMnet" id="P32357"/>
<dbReference type="PaxDb" id="4932-YBL074C"/>
<dbReference type="PeptideAtlas" id="P32357"/>
<dbReference type="EnsemblFungi" id="YBL074C_mRNA">
    <property type="protein sequence ID" value="YBL074C"/>
    <property type="gene ID" value="YBL074C"/>
</dbReference>
<dbReference type="GeneID" id="852205"/>
<dbReference type="KEGG" id="sce:YBL074C"/>
<dbReference type="AGR" id="SGD:S000000170"/>
<dbReference type="SGD" id="S000000170">
    <property type="gene designation" value="AAR2"/>
</dbReference>
<dbReference type="VEuPathDB" id="FungiDB:YBL074C"/>
<dbReference type="eggNOG" id="KOG3937">
    <property type="taxonomic scope" value="Eukaryota"/>
</dbReference>
<dbReference type="GeneTree" id="ENSGT00390000007796"/>
<dbReference type="HOGENOM" id="CLU_858447_0_0_1"/>
<dbReference type="InParanoid" id="P32357"/>
<dbReference type="OMA" id="GSSLQWH"/>
<dbReference type="OrthoDB" id="201752at2759"/>
<dbReference type="BioCyc" id="YEAST:G3O-28966-MONOMER"/>
<dbReference type="BioGRID-ORCS" id="852205">
    <property type="hits" value="1 hit in 10 CRISPR screens"/>
</dbReference>
<dbReference type="EvolutionaryTrace" id="P32357"/>
<dbReference type="PRO" id="PR:P32357"/>
<dbReference type="Proteomes" id="UP000002311">
    <property type="component" value="Chromosome II"/>
</dbReference>
<dbReference type="RNAct" id="P32357">
    <property type="molecule type" value="protein"/>
</dbReference>
<dbReference type="GO" id="GO:0005737">
    <property type="term" value="C:cytoplasm"/>
    <property type="evidence" value="ECO:0000303"/>
    <property type="project" value="ComplexPortal"/>
</dbReference>
<dbReference type="GO" id="GO:0005682">
    <property type="term" value="C:U5 snRNP"/>
    <property type="evidence" value="ECO:0000314"/>
    <property type="project" value="SGD"/>
</dbReference>
<dbReference type="GO" id="GO:0000387">
    <property type="term" value="P:spliceosomal snRNP assembly"/>
    <property type="evidence" value="ECO:0000303"/>
    <property type="project" value="ComplexPortal"/>
</dbReference>
<dbReference type="GO" id="GO:0000244">
    <property type="term" value="P:spliceosomal tri-snRNP complex assembly"/>
    <property type="evidence" value="ECO:0000315"/>
    <property type="project" value="SGD"/>
</dbReference>
<dbReference type="CDD" id="cd13778">
    <property type="entry name" value="Aar2_C"/>
    <property type="match status" value="1"/>
</dbReference>
<dbReference type="CDD" id="cd13777">
    <property type="entry name" value="Aar2_N"/>
    <property type="match status" value="1"/>
</dbReference>
<dbReference type="DisProt" id="DP02721"/>
<dbReference type="Gene3D" id="2.60.34.20">
    <property type="match status" value="1"/>
</dbReference>
<dbReference type="Gene3D" id="1.25.40.550">
    <property type="entry name" value="Aar2, C-terminal domain-like"/>
    <property type="match status" value="1"/>
</dbReference>
<dbReference type="InterPro" id="IPR007946">
    <property type="entry name" value="AAR2"/>
</dbReference>
<dbReference type="InterPro" id="IPR033648">
    <property type="entry name" value="AAR2_C"/>
</dbReference>
<dbReference type="InterPro" id="IPR038514">
    <property type="entry name" value="AAR2_C_sf"/>
</dbReference>
<dbReference type="InterPro" id="IPR033647">
    <property type="entry name" value="Aar2_N"/>
</dbReference>
<dbReference type="InterPro" id="IPR038516">
    <property type="entry name" value="AAR2_N_sf"/>
</dbReference>
<dbReference type="PANTHER" id="PTHR12689">
    <property type="entry name" value="A1 CISTRON SPLICING FACTOR AAR2-RELATED"/>
    <property type="match status" value="1"/>
</dbReference>
<dbReference type="PANTHER" id="PTHR12689:SF4">
    <property type="entry name" value="PROTEIN AAR2 HOMOLOG"/>
    <property type="match status" value="1"/>
</dbReference>
<dbReference type="Pfam" id="PF05282">
    <property type="entry name" value="AAR2"/>
    <property type="match status" value="1"/>
</dbReference>
<dbReference type="Pfam" id="PF20981">
    <property type="entry name" value="AAR2_1st"/>
    <property type="match status" value="1"/>
</dbReference>
<reference key="1">
    <citation type="journal article" date="1991" name="Mol. Cell. Biol.">
        <title>AAR2, a gene for splicing pre-mRNA of the MATa1 cistron in cell type control of Saccharomyces cerevisiae.</title>
        <authorList>
            <person name="Nakazawa N."/>
            <person name="Harashima S."/>
            <person name="Oshima Y."/>
        </authorList>
    </citation>
    <scope>NUCLEOTIDE SEQUENCE [GENOMIC DNA]</scope>
    <scope>FUNCTION</scope>
</reference>
<reference key="2">
    <citation type="journal article" date="1994" name="Yeast">
        <title>The two genes encoding yeast ribosomal protein S8 reside on different chromosomes, and are closely linked to the hsp70 stress protein genes SSA3 and SSA4.</title>
        <authorList>
            <person name="Logghe M."/>
            <person name="Molemans F."/>
            <person name="Fiers W."/>
            <person name="Contreras R."/>
        </authorList>
    </citation>
    <scope>NUCLEOTIDE SEQUENCE [GENOMIC DNA]</scope>
    <source>
        <strain>ATCC 204508 / S288c</strain>
    </source>
</reference>
<reference key="3">
    <citation type="journal article" date="1994" name="EMBO J.">
        <title>Complete DNA sequence of yeast chromosome II.</title>
        <authorList>
            <person name="Feldmann H."/>
            <person name="Aigle M."/>
            <person name="Aljinovic G."/>
            <person name="Andre B."/>
            <person name="Baclet M.C."/>
            <person name="Barthe C."/>
            <person name="Baur A."/>
            <person name="Becam A.-M."/>
            <person name="Biteau N."/>
            <person name="Boles E."/>
            <person name="Brandt T."/>
            <person name="Brendel M."/>
            <person name="Brueckner M."/>
            <person name="Bussereau F."/>
            <person name="Christiansen C."/>
            <person name="Contreras R."/>
            <person name="Crouzet M."/>
            <person name="Cziepluch C."/>
            <person name="Demolis N."/>
            <person name="Delaveau T."/>
            <person name="Doignon F."/>
            <person name="Domdey H."/>
            <person name="Duesterhus S."/>
            <person name="Dubois E."/>
            <person name="Dujon B."/>
            <person name="El Bakkoury M."/>
            <person name="Entian K.-D."/>
            <person name="Feuermann M."/>
            <person name="Fiers W."/>
            <person name="Fobo G.M."/>
            <person name="Fritz C."/>
            <person name="Gassenhuber J."/>
            <person name="Glansdorff N."/>
            <person name="Goffeau A."/>
            <person name="Grivell L.A."/>
            <person name="de Haan M."/>
            <person name="Hein C."/>
            <person name="Herbert C.J."/>
            <person name="Hollenberg C.P."/>
            <person name="Holmstroem K."/>
            <person name="Jacq C."/>
            <person name="Jacquet M."/>
            <person name="Jauniaux J.-C."/>
            <person name="Jonniaux J.-L."/>
            <person name="Kallesoee T."/>
            <person name="Kiesau P."/>
            <person name="Kirchrath L."/>
            <person name="Koetter P."/>
            <person name="Korol S."/>
            <person name="Liebl S."/>
            <person name="Logghe M."/>
            <person name="Lohan A.J.E."/>
            <person name="Louis E.J."/>
            <person name="Li Z.Y."/>
            <person name="Maat M.J."/>
            <person name="Mallet L."/>
            <person name="Mannhaupt G."/>
            <person name="Messenguy F."/>
            <person name="Miosga T."/>
            <person name="Molemans F."/>
            <person name="Mueller S."/>
            <person name="Nasr F."/>
            <person name="Obermaier B."/>
            <person name="Perea J."/>
            <person name="Pierard A."/>
            <person name="Piravandi E."/>
            <person name="Pohl F.M."/>
            <person name="Pohl T.M."/>
            <person name="Potier S."/>
            <person name="Proft M."/>
            <person name="Purnelle B."/>
            <person name="Ramezani Rad M."/>
            <person name="Rieger M."/>
            <person name="Rose M."/>
            <person name="Schaaff-Gerstenschlaeger I."/>
            <person name="Scherens B."/>
            <person name="Schwarzlose C."/>
            <person name="Skala J."/>
            <person name="Slonimski P.P."/>
            <person name="Smits P.H.M."/>
            <person name="Souciet J.-L."/>
            <person name="Steensma H.Y."/>
            <person name="Stucka R."/>
            <person name="Urrestarazu L.A."/>
            <person name="van der Aart Q.J.M."/>
            <person name="Van Dyck L."/>
            <person name="Vassarotti A."/>
            <person name="Vetter I."/>
            <person name="Vierendeels F."/>
            <person name="Vissers S."/>
            <person name="Wagner G."/>
            <person name="de Wergifosse P."/>
            <person name="Wolfe K.H."/>
            <person name="Zagulski M."/>
            <person name="Zimmermann F.K."/>
            <person name="Mewes H.-W."/>
            <person name="Kleine K."/>
        </authorList>
    </citation>
    <scope>NUCLEOTIDE SEQUENCE [LARGE SCALE GENOMIC DNA]</scope>
    <source>
        <strain>ATCC 204508 / S288c</strain>
    </source>
</reference>
<reference key="4">
    <citation type="journal article" date="2014" name="G3 (Bethesda)">
        <title>The reference genome sequence of Saccharomyces cerevisiae: Then and now.</title>
        <authorList>
            <person name="Engel S.R."/>
            <person name="Dietrich F.S."/>
            <person name="Fisk D.G."/>
            <person name="Binkley G."/>
            <person name="Balakrishnan R."/>
            <person name="Costanzo M.C."/>
            <person name="Dwight S.S."/>
            <person name="Hitz B.C."/>
            <person name="Karra K."/>
            <person name="Nash R.S."/>
            <person name="Weng S."/>
            <person name="Wong E.D."/>
            <person name="Lloyd P."/>
            <person name="Skrzypek M.S."/>
            <person name="Miyasato S.R."/>
            <person name="Simison M."/>
            <person name="Cherry J.M."/>
        </authorList>
    </citation>
    <scope>GENOME REANNOTATION</scope>
    <source>
        <strain>ATCC 204508 / S288c</strain>
    </source>
</reference>
<reference key="5">
    <citation type="journal article" date="1990" name="Mol. Cell. Biol.">
        <title>Transcriptional regulation of SSA3, an HSP70 gene from Saccharomyces cerevisiae.</title>
        <authorList>
            <person name="Boorstein W.R."/>
            <person name="Craig E.A."/>
        </authorList>
    </citation>
    <scope>NUCLEOTIDE SEQUENCE [GENOMIC DNA] OF 77-355</scope>
</reference>
<reference key="6">
    <citation type="journal article" date="2001" name="RNA">
        <title>The yeast U5 snRNP coisolated with the U1 snRNP has an unexpected protein composition and includes the splicing factor Aar2p.</title>
        <authorList>
            <person name="Gottschalk A."/>
            <person name="Kastner B."/>
            <person name="Luhrmann R."/>
            <person name="Fabrizio P."/>
        </authorList>
    </citation>
    <scope>FUNCTION</scope>
    <scope>SUBUNIT</scope>
</reference>
<reference key="7">
    <citation type="journal article" date="2003" name="Nature">
        <title>Global analysis of protein expression in yeast.</title>
        <authorList>
            <person name="Ghaemmaghami S."/>
            <person name="Huh W.-K."/>
            <person name="Bower K."/>
            <person name="Howson R.W."/>
            <person name="Belle A."/>
            <person name="Dephoure N."/>
            <person name="O'Shea E.K."/>
            <person name="Weissman J.S."/>
        </authorList>
    </citation>
    <scope>LEVEL OF PROTEIN EXPRESSION [LARGE SCALE ANALYSIS]</scope>
</reference>
<reference key="8">
    <citation type="journal article" date="2009" name="Science">
        <title>Global analysis of Cdk1 substrate phosphorylation sites provides insights into evolution.</title>
        <authorList>
            <person name="Holt L.J."/>
            <person name="Tuch B.B."/>
            <person name="Villen J."/>
            <person name="Johnson A.D."/>
            <person name="Gygi S.P."/>
            <person name="Morgan D.O."/>
        </authorList>
    </citation>
    <scope>IDENTIFICATION BY MASS SPECTROMETRY [LARGE SCALE ANALYSIS]</scope>
</reference>
<reference key="9">
    <citation type="journal article" date="2011" name="Genes Dev.">
        <title>Mechanism for Aar2p function as a U5 snRNP assembly factor.</title>
        <authorList>
            <person name="Weber G."/>
            <person name="Cristao V.F."/>
            <person name="de Lima Alves F."/>
            <person name="Santos K.F."/>
            <person name="Holton N."/>
            <person name="Rappsilber J."/>
            <person name="Beggs J.D."/>
            <person name="Wahl M.C."/>
        </authorList>
    </citation>
    <scope>X-RAY CRYSTALLOGRAPHY (1.8 ANGSTROMS)</scope>
    <scope>INTERACTION WITH PRP8</scope>
    <scope>PHOSPHORYLATION AT SER-253; THR-274; TYR-328; SER-331 AND THR-345</scope>
    <scope>IDENTIFICATION BY MASS SPECTROMETRY</scope>
    <scope>MUTAGENESIS OF SER-253</scope>
</reference>
<reference key="10">
    <citation type="journal article" date="2013" name="Nature">
        <title>Crystal structure of Prp8 reveals active site cavity of the spliceosome.</title>
        <authorList>
            <person name="Galej W.P."/>
            <person name="Oubridge C."/>
            <person name="Newman A.J."/>
            <person name="Nagai K."/>
        </authorList>
    </citation>
    <scope>X-RAY CRYSTALLOGRAPHY (2.0 ANGSTROMS) IN COMPLEX WITH PRP8</scope>
    <scope>INTERACTION WITH PRP8</scope>
</reference>
<comment type="function">
    <text evidence="2 4">Component of the U5 snRNP complex that is required for spliceosome assembly and for pre-mRNA splicing. Involved in splicing pre-mRNA of the A1 cistron and other genes that are important for cell growth.</text>
</comment>
<comment type="subunit">
    <text evidence="2 5 6 7">Heterodimer (Probable). Interacts with PRP8 (via RNase H homology domain and MPN domain), competing with BRR2 for the same binding site. Component of a U5 snRNP complex that contains at least the U5 snRNA, PRP8, SNU114, AAR2, SMB1, SMD1, SMD2, SMD3, SME1, SMX2 and SMX3, but is not a component of the U4/U6-U5 tri-snRNP complex.</text>
</comment>
<comment type="interaction">
    <interactant intactId="EBI-340">
        <id>P32357</id>
    </interactant>
    <interactant intactId="EBI-465">
        <id>P33334</id>
        <label>PRP8</label>
    </interactant>
    <organismsDiffer>false</organismsDiffer>
    <experiments>12</experiments>
</comment>
<comment type="interaction">
    <interactant intactId="EBI-340">
        <id>P32357</id>
    </interactant>
    <interactant intactId="EBI-243">
        <id>P36048</id>
        <label>SNU114</label>
    </interactant>
    <organismsDiffer>false</organismsDiffer>
    <experiments>4</experiments>
</comment>
<comment type="subcellular location">
    <subcellularLocation>
        <location>Cytoplasm</location>
    </subcellularLocation>
    <subcellularLocation>
        <location>Nucleus</location>
    </subcellularLocation>
    <text>This protein lacks a nuclear localization signal, it may interact in the cytoplasm with a component of spliceosomes via the leucine-zipper and then be transported into the nucleus.</text>
</comment>
<comment type="PTM">
    <text evidence="5">Phosphorylated on serine and tyrosine residues.</text>
</comment>
<comment type="miscellaneous">
    <text evidence="3">Present with 7330 molecules/cell in log phase SD medium.</text>
</comment>
<comment type="similarity">
    <text evidence="7">Belongs to the AAR2 family.</text>
</comment>
<sequence length="355" mass="41688">MNTVPFTSAPIEVTIGIDQYSFNVKENQPFHGIKDIPIGHVHVIHFQHADNSSMRYGYWFDCRMGNFYIQYDPKDGLYKMMEERDGAKFENIVHNFKERQMMVSYPKIDEDDTWYNLTEFVQMDKIRKIVRKDENQFSYVDSSMTTVQENELLKSSLQKAGSKMEAKNEDDPAHSLNYTVINFKSREAIRPGHEMEDFLDKSYYLNTVMLQGIFKNSSNYFGELQFAFLNAMFFGNYGSSLQWHAMIELICSSATVPKHMLDKLDEILYYQIKTLPEQYSDILLNERVWNICLYSSFQKNSLHNTEKIMENKYPELLGKDNEDDALIYGISDEERDDEDDEHNPTIVGGLYYQRP</sequence>
<evidence type="ECO:0000256" key="1">
    <source>
        <dbReference type="SAM" id="MobiDB-lite"/>
    </source>
</evidence>
<evidence type="ECO:0000269" key="2">
    <source>
    </source>
</evidence>
<evidence type="ECO:0000269" key="3">
    <source>
    </source>
</evidence>
<evidence type="ECO:0000269" key="4">
    <source>
    </source>
</evidence>
<evidence type="ECO:0000269" key="5">
    <source>
    </source>
</evidence>
<evidence type="ECO:0000269" key="6">
    <source>
    </source>
</evidence>
<evidence type="ECO:0000305" key="7"/>
<evidence type="ECO:0007829" key="8">
    <source>
        <dbReference type="PDB" id="4I43"/>
    </source>
</evidence>
<evidence type="ECO:0007829" key="9">
    <source>
        <dbReference type="PDB" id="4ILI"/>
    </source>
</evidence>
<evidence type="ECO:0007829" key="10">
    <source>
        <dbReference type="PDB" id="5R0D"/>
    </source>
</evidence>
<evidence type="ECO:0007829" key="11">
    <source>
        <dbReference type="PDB" id="7FMJ"/>
    </source>
</evidence>
<evidence type="ECO:0007829" key="12">
    <source>
        <dbReference type="PDB" id="7FNF"/>
    </source>
</evidence>
<feature type="chain" id="PRO_0000209705" description="A1 cistron-splicing factor AAR2">
    <location>
        <begin position="1"/>
        <end position="355"/>
    </location>
</feature>
<feature type="region of interest" description="Leucine-zipper">
    <location>
        <begin position="261"/>
        <end position="282"/>
    </location>
</feature>
<feature type="region of interest" description="Disordered" evidence="1">
    <location>
        <begin position="331"/>
        <end position="355"/>
    </location>
</feature>
<feature type="compositionally biased region" description="Acidic residues" evidence="1">
    <location>
        <begin position="331"/>
        <end position="341"/>
    </location>
</feature>
<feature type="modified residue" description="Phosphoserine" evidence="5">
    <location>
        <position position="253"/>
    </location>
</feature>
<feature type="modified residue" description="Phosphothreonine" evidence="5">
    <location>
        <position position="274"/>
    </location>
</feature>
<feature type="modified residue" description="Phosphotyrosine" evidence="5">
    <location>
        <position position="328"/>
    </location>
</feature>
<feature type="modified residue" description="Phosphoserine" evidence="5">
    <location>
        <position position="331"/>
    </location>
</feature>
<feature type="modified residue" description="Phosphothreonine" evidence="5">
    <location>
        <position position="345"/>
    </location>
</feature>
<feature type="mutagenesis site" description="No effect on interaction with PRP8." evidence="5">
    <original>S</original>
    <variation>A</variation>
    <location>
        <position position="253"/>
    </location>
</feature>
<feature type="mutagenesis site" description="Disrupts interaction with PRP8." evidence="5">
    <original>S</original>
    <variation>D</variation>
    <variation>E</variation>
    <location>
        <position position="253"/>
    </location>
</feature>
<feature type="strand" evidence="10">
    <location>
        <begin position="2"/>
        <end position="7"/>
    </location>
</feature>
<feature type="strand" evidence="10">
    <location>
        <begin position="13"/>
        <end position="17"/>
    </location>
</feature>
<feature type="strand" evidence="10">
    <location>
        <begin position="20"/>
        <end position="24"/>
    </location>
</feature>
<feature type="strand" evidence="11">
    <location>
        <begin position="26"/>
        <end position="29"/>
    </location>
</feature>
<feature type="strand" evidence="10">
    <location>
        <begin position="32"/>
        <end position="36"/>
    </location>
</feature>
<feature type="strand" evidence="12">
    <location>
        <begin position="38"/>
        <end position="40"/>
    </location>
</feature>
<feature type="strand" evidence="10">
    <location>
        <begin position="42"/>
        <end position="48"/>
    </location>
</feature>
<feature type="strand" evidence="10">
    <location>
        <begin position="51"/>
        <end position="60"/>
    </location>
</feature>
<feature type="helix" evidence="10">
    <location>
        <begin position="62"/>
        <end position="64"/>
    </location>
</feature>
<feature type="strand" evidence="10">
    <location>
        <begin position="67"/>
        <end position="72"/>
    </location>
</feature>
<feature type="turn" evidence="10">
    <location>
        <begin position="73"/>
        <end position="76"/>
    </location>
</feature>
<feature type="strand" evidence="10">
    <location>
        <begin position="77"/>
        <end position="82"/>
    </location>
</feature>
<feature type="helix" evidence="10">
    <location>
        <begin position="86"/>
        <end position="98"/>
    </location>
</feature>
<feature type="strand" evidence="10">
    <location>
        <begin position="102"/>
        <end position="104"/>
    </location>
</feature>
<feature type="helix" evidence="10">
    <location>
        <begin position="113"/>
        <end position="118"/>
    </location>
</feature>
<feature type="helix" evidence="10">
    <location>
        <begin position="123"/>
        <end position="129"/>
    </location>
</feature>
<feature type="strand" evidence="10">
    <location>
        <begin position="136"/>
        <end position="141"/>
    </location>
</feature>
<feature type="helix" evidence="10">
    <location>
        <begin position="147"/>
        <end position="151"/>
    </location>
</feature>
<feature type="strand" evidence="9">
    <location>
        <begin position="153"/>
        <end position="155"/>
    </location>
</feature>
<feature type="helix" evidence="10">
    <location>
        <begin position="172"/>
        <end position="174"/>
    </location>
</feature>
<feature type="strand" evidence="10">
    <location>
        <begin position="183"/>
        <end position="185"/>
    </location>
</feature>
<feature type="turn" evidence="10">
    <location>
        <begin position="186"/>
        <end position="188"/>
    </location>
</feature>
<feature type="helix" evidence="10">
    <location>
        <begin position="194"/>
        <end position="199"/>
    </location>
</feature>
<feature type="helix" evidence="10">
    <location>
        <begin position="202"/>
        <end position="206"/>
    </location>
</feature>
<feature type="helix" evidence="10">
    <location>
        <begin position="207"/>
        <end position="214"/>
    </location>
</feature>
<feature type="helix" evidence="10">
    <location>
        <begin position="217"/>
        <end position="234"/>
    </location>
</feature>
<feature type="helix" evidence="10">
    <location>
        <begin position="237"/>
        <end position="251"/>
    </location>
</feature>
<feature type="helix" evidence="10">
    <location>
        <begin position="258"/>
        <end position="274"/>
    </location>
</feature>
<feature type="helix" evidence="10">
    <location>
        <begin position="277"/>
        <end position="279"/>
    </location>
</feature>
<feature type="helix" evidence="10">
    <location>
        <begin position="280"/>
        <end position="283"/>
    </location>
</feature>
<feature type="helix" evidence="10">
    <location>
        <begin position="286"/>
        <end position="294"/>
    </location>
</feature>
<feature type="turn" evidence="10">
    <location>
        <begin position="297"/>
        <end position="300"/>
    </location>
</feature>
<feature type="helix" evidence="10">
    <location>
        <begin position="303"/>
        <end position="312"/>
    </location>
</feature>
<feature type="turn" evidence="10">
    <location>
        <begin position="314"/>
        <end position="316"/>
    </location>
</feature>
<feature type="strand" evidence="8">
    <location>
        <begin position="345"/>
        <end position="353"/>
    </location>
</feature>
<organism>
    <name type="scientific">Saccharomyces cerevisiae (strain ATCC 204508 / S288c)</name>
    <name type="common">Baker's yeast</name>
    <dbReference type="NCBI Taxonomy" id="559292"/>
    <lineage>
        <taxon>Eukaryota</taxon>
        <taxon>Fungi</taxon>
        <taxon>Dikarya</taxon>
        <taxon>Ascomycota</taxon>
        <taxon>Saccharomycotina</taxon>
        <taxon>Saccharomycetes</taxon>
        <taxon>Saccharomycetales</taxon>
        <taxon>Saccharomycetaceae</taxon>
        <taxon>Saccharomyces</taxon>
    </lineage>
</organism>
<gene>
    <name type="primary">AAR2</name>
    <name type="ordered locus">YBL074C</name>
    <name type="ORF">YBL06.06</name>
    <name type="ORF">YBL0611</name>
</gene>
<name>AAR2_YEAST</name>
<accession>P32357</accession>
<accession>D6VPS8</accession>
<keyword id="KW-0002">3D-structure</keyword>
<keyword id="KW-0963">Cytoplasm</keyword>
<keyword id="KW-0507">mRNA processing</keyword>
<keyword id="KW-0508">mRNA splicing</keyword>
<keyword id="KW-0539">Nucleus</keyword>
<keyword id="KW-0597">Phosphoprotein</keyword>
<keyword id="KW-1185">Reference proteome</keyword>
<protein>
    <recommendedName>
        <fullName>A1 cistron-splicing factor AAR2</fullName>
    </recommendedName>
</protein>